<organism>
    <name type="scientific">Homo sapiens</name>
    <name type="common">Human</name>
    <dbReference type="NCBI Taxonomy" id="9606"/>
    <lineage>
        <taxon>Eukaryota</taxon>
        <taxon>Metazoa</taxon>
        <taxon>Chordata</taxon>
        <taxon>Craniata</taxon>
        <taxon>Vertebrata</taxon>
        <taxon>Euteleostomi</taxon>
        <taxon>Mammalia</taxon>
        <taxon>Eutheria</taxon>
        <taxon>Euarchontoglires</taxon>
        <taxon>Primates</taxon>
        <taxon>Haplorrhini</taxon>
        <taxon>Catarrhini</taxon>
        <taxon>Hominidae</taxon>
        <taxon>Homo</taxon>
    </lineage>
</organism>
<accession>P02788</accession>
<accession>A8K9U8</accession>
<accession>B2MV13</accession>
<accession>B7Z4X2</accession>
<accession>E7EQH5</accession>
<accession>O00756</accession>
<accession>Q16780</accession>
<accession>Q16785</accession>
<accession>Q16786</accession>
<accession>Q16789</accession>
<accession>Q5DSM0</accession>
<accession>Q8IU92</accession>
<accession>Q8IZH6</accession>
<accession>Q8TCD2</accession>
<accession>Q96KZ4</accession>
<accession>Q96KZ5</accession>
<accession>Q9H1Z3</accession>
<accession>Q9UCY5</accession>
<evidence type="ECO:0000255" key="1">
    <source>
        <dbReference type="PROSITE-ProRule" id="PRU00741"/>
    </source>
</evidence>
<evidence type="ECO:0000269" key="2">
    <source>
    </source>
</evidence>
<evidence type="ECO:0000269" key="3">
    <source>
    </source>
</evidence>
<evidence type="ECO:0000269" key="4">
    <source>
    </source>
</evidence>
<evidence type="ECO:0000269" key="5">
    <source>
    </source>
</evidence>
<evidence type="ECO:0000269" key="6">
    <source>
    </source>
</evidence>
<evidence type="ECO:0000269" key="7">
    <source>
    </source>
</evidence>
<evidence type="ECO:0000269" key="8">
    <source>
    </source>
</evidence>
<evidence type="ECO:0000269" key="9">
    <source>
    </source>
</evidence>
<evidence type="ECO:0000269" key="10">
    <source>
    </source>
</evidence>
<evidence type="ECO:0000269" key="11">
    <source>
    </source>
</evidence>
<evidence type="ECO:0000269" key="12">
    <source>
    </source>
</evidence>
<evidence type="ECO:0000269" key="13">
    <source>
    </source>
</evidence>
<evidence type="ECO:0000269" key="14">
    <source>
    </source>
</evidence>
<evidence type="ECO:0000269" key="15">
    <source>
    </source>
</evidence>
<evidence type="ECO:0000269" key="16">
    <source>
    </source>
</evidence>
<evidence type="ECO:0000269" key="17">
    <source>
    </source>
</evidence>
<evidence type="ECO:0000269" key="18">
    <source>
    </source>
</evidence>
<evidence type="ECO:0000269" key="19">
    <source>
    </source>
</evidence>
<evidence type="ECO:0000269" key="20">
    <source>
    </source>
</evidence>
<evidence type="ECO:0000269" key="21">
    <source>
    </source>
</evidence>
<evidence type="ECO:0000269" key="22">
    <source>
    </source>
</evidence>
<evidence type="ECO:0000269" key="23">
    <source>
    </source>
</evidence>
<evidence type="ECO:0000269" key="24">
    <source>
    </source>
</evidence>
<evidence type="ECO:0000269" key="25">
    <source>
    </source>
</evidence>
<evidence type="ECO:0000269" key="26">
    <source>
    </source>
</evidence>
<evidence type="ECO:0000269" key="27">
    <source>
    </source>
</evidence>
<evidence type="ECO:0000269" key="28">
    <source>
    </source>
</evidence>
<evidence type="ECO:0000269" key="29">
    <source>
    </source>
</evidence>
<evidence type="ECO:0000269" key="30">
    <source>
    </source>
</evidence>
<evidence type="ECO:0000269" key="31">
    <source>
    </source>
</evidence>
<evidence type="ECO:0000269" key="32">
    <source>
    </source>
</evidence>
<evidence type="ECO:0000269" key="33">
    <source>
    </source>
</evidence>
<evidence type="ECO:0000269" key="34">
    <source>
    </source>
</evidence>
<evidence type="ECO:0000269" key="35">
    <source>
    </source>
</evidence>
<evidence type="ECO:0000269" key="36">
    <source>
    </source>
</evidence>
<evidence type="ECO:0000269" key="37">
    <source>
    </source>
</evidence>
<evidence type="ECO:0000269" key="38">
    <source>
    </source>
</evidence>
<evidence type="ECO:0000269" key="39">
    <source>
    </source>
</evidence>
<evidence type="ECO:0000269" key="40">
    <source>
    </source>
</evidence>
<evidence type="ECO:0000269" key="41">
    <source>
    </source>
</evidence>
<evidence type="ECO:0000269" key="42">
    <source>
    </source>
</evidence>
<evidence type="ECO:0000269" key="43">
    <source>
    </source>
</evidence>
<evidence type="ECO:0000269" key="44">
    <source>
    </source>
</evidence>
<evidence type="ECO:0000269" key="45">
    <source>
    </source>
</evidence>
<evidence type="ECO:0000269" key="46">
    <source>
    </source>
</evidence>
<evidence type="ECO:0000269" key="47">
    <source>
    </source>
</evidence>
<evidence type="ECO:0000269" key="48">
    <source>
    </source>
</evidence>
<evidence type="ECO:0000269" key="49">
    <source>
    </source>
</evidence>
<evidence type="ECO:0000269" key="50">
    <source>
    </source>
</evidence>
<evidence type="ECO:0000269" key="51">
    <source>
    </source>
</evidence>
<evidence type="ECO:0000269" key="52">
    <source>
    </source>
</evidence>
<evidence type="ECO:0000269" key="53">
    <source>
    </source>
</evidence>
<evidence type="ECO:0000269" key="54">
    <source>
    </source>
</evidence>
<evidence type="ECO:0000269" key="55">
    <source>
    </source>
</evidence>
<evidence type="ECO:0000269" key="56">
    <source ref="10"/>
</evidence>
<evidence type="ECO:0000269" key="57">
    <source ref="11"/>
</evidence>
<evidence type="ECO:0000269" key="58">
    <source ref="17"/>
</evidence>
<evidence type="ECO:0000269" key="59">
    <source ref="2"/>
</evidence>
<evidence type="ECO:0000269" key="60">
    <source ref="25"/>
</evidence>
<evidence type="ECO:0000269" key="61">
    <source ref="72"/>
</evidence>
<evidence type="ECO:0000269" key="62">
    <source ref="75"/>
</evidence>
<evidence type="ECO:0000269" key="63">
    <source ref="76"/>
</evidence>
<evidence type="ECO:0000269" key="64">
    <source ref="8"/>
</evidence>
<evidence type="ECO:0000269" key="65">
    <source ref="9"/>
</evidence>
<evidence type="ECO:0000303" key="66">
    <source>
    </source>
</evidence>
<evidence type="ECO:0000303" key="67">
    <source>
    </source>
</evidence>
<evidence type="ECO:0000305" key="68"/>
<evidence type="ECO:0000305" key="69">
    <source>
    </source>
</evidence>
<evidence type="ECO:0000312" key="70">
    <source>
        <dbReference type="HGNC" id="HGNC:6720"/>
    </source>
</evidence>
<evidence type="ECO:0007829" key="71">
    <source>
        <dbReference type="PDB" id="1B0L"/>
    </source>
</evidence>
<evidence type="ECO:0007829" key="72">
    <source>
        <dbReference type="PDB" id="1CB6"/>
    </source>
</evidence>
<evidence type="ECO:0007829" key="73">
    <source>
        <dbReference type="PDB" id="1H45"/>
    </source>
</evidence>
<evidence type="ECO:0007829" key="74">
    <source>
        <dbReference type="PDB" id="1LCT"/>
    </source>
</evidence>
<evidence type="ECO:0007829" key="75">
    <source>
        <dbReference type="PDB" id="1LFH"/>
    </source>
</evidence>
<evidence type="ECO:0007829" key="76">
    <source>
        <dbReference type="PDB" id="1LFI"/>
    </source>
</evidence>
<evidence type="ECO:0007829" key="77">
    <source>
        <dbReference type="PDB" id="1LGB"/>
    </source>
</evidence>
<evidence type="ECO:0007829" key="78">
    <source>
        <dbReference type="PDB" id="1N76"/>
    </source>
</evidence>
<evidence type="ECO:0007829" key="79">
    <source>
        <dbReference type="PDB" id="1Z6W"/>
    </source>
</evidence>
<evidence type="ECO:0007829" key="80">
    <source>
        <dbReference type="PDB" id="7JRD"/>
    </source>
</evidence>
<feature type="signal peptide" evidence="15">
    <location>
        <begin position="1"/>
        <end position="19"/>
    </location>
</feature>
<feature type="chain" id="PRO_0000035732" description="Lactotransferrin">
    <location>
        <begin position="20"/>
        <end position="710"/>
    </location>
</feature>
<feature type="peptide" id="PRO_0000422770" description="Lactoferricin-H">
    <location>
        <begin position="20"/>
        <end position="67"/>
    </location>
</feature>
<feature type="peptide" id="PRO_0000035733" description="Kaliocin-1">
    <location>
        <begin position="171"/>
        <end position="201"/>
    </location>
</feature>
<feature type="peptide" id="PRO_0000035734" description="Lactoferroxin-A">
    <location>
        <begin position="338"/>
        <end position="343"/>
    </location>
</feature>
<feature type="peptide" id="PRO_0000035735" description="Lactoferroxin-B">
    <location>
        <begin position="543"/>
        <end position="547"/>
    </location>
</feature>
<feature type="peptide" id="PRO_0000035736" description="Lactoferroxin-C">
    <location>
        <begin position="680"/>
        <end position="686"/>
    </location>
</feature>
<feature type="domain" description="Transferrin-like 1" evidence="1">
    <location>
        <begin position="25"/>
        <end position="352"/>
    </location>
</feature>
<feature type="domain" description="Transferrin-like 2" evidence="1">
    <location>
        <begin position="364"/>
        <end position="695"/>
    </location>
</feature>
<feature type="region of interest" description="Bactericidal and antifungal activity">
    <location>
        <begin position="20"/>
        <end position="29"/>
    </location>
</feature>
<feature type="region of interest" description="Critical for glycosaminoglycan, lipid A, lysozyme and DNA binding">
    <location>
        <begin position="20"/>
        <end position="24"/>
    </location>
</feature>
<feature type="region of interest" description="Important for full bactericidal and antifungal activities">
    <location>
        <begin position="21"/>
        <end position="22"/>
    </location>
</feature>
<feature type="region of interest" description="Bactericidal and antifungal activity">
    <location>
        <begin position="39"/>
        <end position="49"/>
    </location>
</feature>
<feature type="region of interest" description="Interaction with lipopolysaccharide">
    <location>
        <begin position="39"/>
        <end position="49"/>
    </location>
</feature>
<feature type="region of interest" description="Interaction with PspA">
    <location>
        <begin position="39"/>
        <end position="46"/>
    </location>
</feature>
<feature type="region of interest" description="Involved in glycosaminoglycan binding">
    <location>
        <begin position="46"/>
        <end position="51"/>
    </location>
</feature>
<feature type="region of interest" description="Interaction with PspA">
    <location>
        <begin position="57"/>
        <end position="58"/>
    </location>
</feature>
<feature type="active site" evidence="69">
    <location>
        <position position="92"/>
    </location>
</feature>
<feature type="active site" description="Nucleophile" evidence="69">
    <location>
        <position position="278"/>
    </location>
</feature>
<feature type="binding site" evidence="1 2 4 11 20 26 30 39 48 49 50 51 52 61">
    <location>
        <position position="79"/>
    </location>
    <ligand>
        <name>Fe(3+)</name>
        <dbReference type="ChEBI" id="CHEBI:29034"/>
        <label>1</label>
    </ligand>
</feature>
<feature type="binding site" evidence="1 2 4 11 20 26 30 39 48 49 50 51 52 61">
    <location>
        <position position="111"/>
    </location>
    <ligand>
        <name>Fe(3+)</name>
        <dbReference type="ChEBI" id="CHEBI:29034"/>
        <label>1</label>
    </ligand>
</feature>
<feature type="binding site" evidence="1 2 4 6 11 20 23 26 30 39 48 49 51 52 61">
    <location>
        <position position="136"/>
    </location>
    <ligand>
        <name>hydrogencarbonate</name>
        <dbReference type="ChEBI" id="CHEBI:17544"/>
        <label>1</label>
    </ligand>
</feature>
<feature type="binding site" evidence="1 2 4 6 11 20 23 26 30 39 48 49 51 52 61">
    <location>
        <position position="140"/>
    </location>
    <ligand>
        <name>hydrogencarbonate</name>
        <dbReference type="ChEBI" id="CHEBI:17544"/>
        <label>1</label>
    </ligand>
</feature>
<feature type="binding site" evidence="1 2 4 6 11 20 23 26 30 39 48 49 51 52 61">
    <location>
        <position position="142"/>
    </location>
    <ligand>
        <name>hydrogencarbonate</name>
        <dbReference type="ChEBI" id="CHEBI:17544"/>
        <label>1</label>
    </ligand>
</feature>
<feature type="binding site" evidence="1 2 4 6 11 20 23 26 30 39 48 49 51 52 61">
    <location>
        <position position="143"/>
    </location>
    <ligand>
        <name>hydrogencarbonate</name>
        <dbReference type="ChEBI" id="CHEBI:17544"/>
        <label>1</label>
    </ligand>
</feature>
<feature type="binding site" evidence="1 2 4 11 20 26 30 39 48 49 50 51 52 61">
    <location>
        <position position="211"/>
    </location>
    <ligand>
        <name>Fe(3+)</name>
        <dbReference type="ChEBI" id="CHEBI:29034"/>
        <label>1</label>
    </ligand>
</feature>
<feature type="binding site" evidence="1 2 4 11 20 26 30 39 48 49 50 51 52 61">
    <location>
        <position position="272"/>
    </location>
    <ligand>
        <name>Fe(3+)</name>
        <dbReference type="ChEBI" id="CHEBI:29034"/>
        <label>1</label>
    </ligand>
</feature>
<feature type="binding site" evidence="1 2 4 11 20 26 30 39 48 49 50 51 52 61">
    <location>
        <position position="414"/>
    </location>
    <ligand>
        <name>Fe(3+)</name>
        <dbReference type="ChEBI" id="CHEBI:29034"/>
        <label>2</label>
    </ligand>
</feature>
<feature type="binding site" evidence="1 2 4 11 20 26 30 39 48 49 50 51 52 61">
    <location>
        <position position="454"/>
    </location>
    <ligand>
        <name>Fe(3+)</name>
        <dbReference type="ChEBI" id="CHEBI:29034"/>
        <label>2</label>
    </ligand>
</feature>
<feature type="binding site" evidence="1 2 4 6 11 20 23 26 30 39 48 49 51 52 61">
    <location>
        <position position="480"/>
    </location>
    <ligand>
        <name>hydrogencarbonate</name>
        <dbReference type="ChEBI" id="CHEBI:17544"/>
        <label>2</label>
    </ligand>
</feature>
<feature type="binding site" evidence="1 2 4 6 11 20 23 26 30 39 48 49 51 52 61">
    <location>
        <position position="484"/>
    </location>
    <ligand>
        <name>hydrogencarbonate</name>
        <dbReference type="ChEBI" id="CHEBI:17544"/>
        <label>2</label>
    </ligand>
</feature>
<feature type="binding site" evidence="1 2 4 6 11 20 23 26 30 39 48 49 51 52 61">
    <location>
        <position position="486"/>
    </location>
    <ligand>
        <name>hydrogencarbonate</name>
        <dbReference type="ChEBI" id="CHEBI:17544"/>
        <label>2</label>
    </ligand>
</feature>
<feature type="binding site" evidence="1 2 4 6 11 20 23 26 30 39 48 49 51 52 61">
    <location>
        <position position="487"/>
    </location>
    <ligand>
        <name>hydrogencarbonate</name>
        <dbReference type="ChEBI" id="CHEBI:17544"/>
        <label>2</label>
    </ligand>
</feature>
<feature type="binding site" evidence="1 2 4 11 20 26 30 39 48 49 50 51 52 61">
    <location>
        <position position="547"/>
    </location>
    <ligand>
        <name>Fe(3+)</name>
        <dbReference type="ChEBI" id="CHEBI:29034"/>
        <label>2</label>
    </ligand>
</feature>
<feature type="binding site" evidence="1 2 4 11 20 26 30 39 48 49 50 51 52 61">
    <location>
        <position position="616"/>
    </location>
    <ligand>
        <name>Fe(3+)</name>
        <dbReference type="ChEBI" id="CHEBI:29034"/>
        <label>2</label>
    </ligand>
</feature>
<feature type="site" description="Interaction with PspA">
    <location>
        <position position="23"/>
    </location>
</feature>
<feature type="site" description="Interaction with PspA">
    <location>
        <position position="32"/>
    </location>
</feature>
<feature type="site" description="Important for iron binding">
    <location>
        <position position="229"/>
    </location>
</feature>
<feature type="glycosylation site" description="N-linked (GlcNAc...) asparagine" evidence="19 20 23 26 32 47 61">
    <location>
        <position position="156"/>
    </location>
</feature>
<feature type="glycosylation site" description="N-linked (GlcNAc...) asparagine" evidence="20 23 26 32 34 61">
    <location>
        <position position="497"/>
    </location>
</feature>
<feature type="glycosylation site" description="N-linked (GlcNAc...) asparagine" evidence="32">
    <location>
        <position position="642"/>
    </location>
</feature>
<feature type="disulfide bond">
    <location>
        <begin position="28"/>
        <end position="64"/>
    </location>
</feature>
<feature type="disulfide bond">
    <location>
        <begin position="38"/>
        <end position="55"/>
    </location>
</feature>
<feature type="disulfide bond">
    <location>
        <begin position="134"/>
        <end position="217"/>
    </location>
</feature>
<feature type="disulfide bond">
    <location>
        <begin position="176"/>
        <end position="192"/>
    </location>
</feature>
<feature type="disulfide bond">
    <location>
        <begin position="189"/>
        <end position="200"/>
    </location>
</feature>
<feature type="disulfide bond">
    <location>
        <begin position="250"/>
        <end position="264"/>
    </location>
</feature>
<feature type="disulfide bond">
    <location>
        <begin position="367"/>
        <end position="399"/>
    </location>
</feature>
<feature type="disulfide bond">
    <location>
        <begin position="377"/>
        <end position="390"/>
    </location>
</feature>
<feature type="disulfide bond">
    <location>
        <begin position="424"/>
        <end position="705"/>
    </location>
</feature>
<feature type="disulfide bond">
    <location>
        <begin position="446"/>
        <end position="668"/>
    </location>
</feature>
<feature type="disulfide bond">
    <location>
        <begin position="478"/>
        <end position="553"/>
    </location>
</feature>
<feature type="disulfide bond">
    <location>
        <begin position="502"/>
        <end position="696"/>
    </location>
</feature>
<feature type="disulfide bond">
    <location>
        <begin position="512"/>
        <end position="526"/>
    </location>
</feature>
<feature type="disulfide bond">
    <location>
        <begin position="523"/>
        <end position="536"/>
    </location>
</feature>
<feature type="disulfide bond">
    <location>
        <begin position="594"/>
        <end position="608"/>
    </location>
</feature>
<feature type="disulfide bond">
    <location>
        <begin position="646"/>
        <end position="651"/>
    </location>
</feature>
<feature type="splice variant" id="VSP_044308" description="In isoform DeltaLf." evidence="66 67">
    <location>
        <begin position="1"/>
        <end position="44"/>
    </location>
</feature>
<feature type="sequence variant" id="VAR_069298" description="Associated with lower plasma lactoferrin concentrations; dbSNP:rs10662431." evidence="8 15 16 21 38 39 40 42 56 57 58 59 64 65">
    <original>R</original>
    <variation>RR</variation>
    <location>
        <position position="22"/>
    </location>
</feature>
<feature type="sequence variant" id="VAR_013504" description="In dbSNP:rs1126477." evidence="8 15 39 55 57 64 65">
    <original>A</original>
    <variation>T</variation>
    <location>
        <position position="29"/>
    </location>
</feature>
<feature type="sequence variant" id="VAR_013505" description="Decreased antibacterial activity against Gram-positive bacteria; seems to reduce susceptibility to localized juvenile periodontitis; associated with increased plasma lactoferrin concentrations and possibly with susceptibility to coronary artery stenosis; dbSNP:rs1126478." evidence="8 15 38 39 55 57 64 65">
    <original>K</original>
    <variation>R</variation>
    <location>
        <position position="47"/>
    </location>
</feature>
<feature type="sequence variant" id="VAR_013506" description="In dbSNP:rs1126479." evidence="42">
    <original>I</original>
    <variation>T</variation>
    <location>
        <position position="148"/>
    </location>
</feature>
<feature type="sequence variant" id="VAR_013507" description="In dbSNP:rs1042055." evidence="42 56">
    <original>G</original>
    <variation>C</variation>
    <location>
        <position position="422"/>
    </location>
</feature>
<feature type="sequence variant" id="VAR_013508" description="In dbSNP:rs2073495." evidence="8 26 39 43 60 65">
    <original>E</original>
    <variation>D</variation>
    <location>
        <position position="579"/>
    </location>
</feature>
<feature type="mutagenesis site" description="Abolishes binding to heparin, lipid A, lysozyme and DNA." evidence="54">
    <location>
        <begin position="20"/>
        <end position="23"/>
    </location>
</feature>
<feature type="mutagenesis site" description="Greatly impairs binding to heparin, lipid A, lysozyme and DNA. Impairs antibacterial activity." evidence="7">
    <location>
        <begin position="20"/>
        <end position="22"/>
    </location>
</feature>
<feature type="mutagenesis site" description="Impairs binding to heparin, lipid A, lysozyme and DNA.">
    <location>
        <begin position="20"/>
        <end position="21"/>
    </location>
</feature>
<feature type="mutagenesis site" description="Impairs iron binding and changes domain closure." evidence="49">
    <original>D</original>
    <variation>S</variation>
    <location>
        <position position="79"/>
    </location>
</feature>
<feature type="mutagenesis site" description="Almost no protease activity." evidence="12">
    <original>K</original>
    <variation>A</variation>
    <location>
        <position position="92"/>
    </location>
</feature>
<feature type="mutagenesis site" description="Disrupts anion binding site and destabilizes iron binding." evidence="9 51">
    <original>R</original>
    <variation>D</variation>
    <variation>E</variation>
    <variation>S</variation>
    <location>
        <position position="140"/>
    </location>
</feature>
<feature type="mutagenesis site" description="Destabilizes iron binding slightly." evidence="4 11">
    <original>R</original>
    <variation>G</variation>
    <variation>E</variation>
    <location>
        <position position="229"/>
    </location>
</feature>
<feature type="mutagenesis site" description="Destabilizes iron binding significantly." evidence="4 11">
    <original>R</original>
    <variation>K</variation>
    <variation>L</variation>
    <location>
        <position position="229"/>
    </location>
</feature>
<feature type="mutagenesis site" description="No effect." evidence="12">
    <original>P</original>
    <variation>V</variation>
    <location>
        <position position="270"/>
    </location>
</feature>
<feature type="mutagenesis site" description="Destabilizes iron binding." evidence="52">
    <original>H</original>
    <variation>A</variation>
    <variation>C</variation>
    <variation>G</variation>
    <variation>E</variation>
    <variation>F</variation>
    <variation>L</variation>
    <variation>M</variation>
    <variation>P</variation>
    <variation>Q</variation>
    <variation>T</variation>
    <variation>Y</variation>
    <location>
        <position position="272"/>
    </location>
</feature>
<feature type="mutagenesis site" description="No protease activity." evidence="12">
    <original>S</original>
    <variation>A</variation>
    <location>
        <position position="278"/>
    </location>
</feature>
<feature type="sequence conflict" description="In Ref. 17; AAA58656." evidence="68" ref="17">
    <original>L</original>
    <variation>P</variation>
    <location>
        <position position="14"/>
    </location>
</feature>
<feature type="sequence conflict" description="In Ref. 14; AAH15822/AAH15823." evidence="68" ref="14">
    <original>R</original>
    <variation>S</variation>
    <location>
        <position position="21"/>
    </location>
</feature>
<feature type="sequence conflict" description="In Ref. 22; AA sequence." evidence="68" ref="22">
    <original>T</original>
    <variation>D</variation>
    <location>
        <position position="36"/>
    </location>
</feature>
<feature type="sequence conflict" description="In Ref. 14; AAH22347." evidence="68" ref="14">
    <original>R</original>
    <variation>C</variation>
    <location>
        <position position="49"/>
    </location>
</feature>
<feature type="sequence conflict" description="In Ref. 14; AAH15823." evidence="68" ref="14">
    <original>G</original>
    <variation>C</variation>
    <location>
        <position position="130"/>
    </location>
</feature>
<feature type="sequence conflict" description="In Ref. 14; AAH22347." evidence="68" ref="14">
    <original>L</original>
    <variation>R</variation>
    <location>
        <position position="138"/>
    </location>
</feature>
<feature type="sequence conflict" description="In Ref. 18; AA sequence." evidence="68" ref="18">
    <location>
        <position position="140"/>
    </location>
</feature>
<feature type="sequence conflict" description="In Ref. 18; AA sequence." evidence="68" ref="18">
    <location>
        <position position="169"/>
    </location>
</feature>
<feature type="sequence conflict" description="In Ref. 18; AA sequence." evidence="68" ref="18">
    <original>DA</original>
    <variation>NASVLMDSEGGFLAR</variation>
    <location>
        <begin position="409"/>
        <end position="410"/>
    </location>
</feature>
<feature type="sequence conflict" description="In Ref. 17; AAA59511." evidence="68" ref="17">
    <original>G</original>
    <variation>E</variation>
    <location>
        <position position="415"/>
    </location>
</feature>
<feature type="sequence conflict" description="In Ref. 17; AAA58656." evidence="68" ref="17">
    <original>A</original>
    <variation>G</variation>
    <location>
        <position position="431"/>
    </location>
</feature>
<feature type="sequence conflict" description="In Ref. 14; AAH15822/AAH15823." evidence="68" ref="14">
    <original>A</original>
    <variation>T</variation>
    <location>
        <position position="456"/>
    </location>
</feature>
<feature type="sequence conflict" description="In Ref. 26; AAA86665." evidence="68" ref="26">
    <original>G</original>
    <variation>A</variation>
    <location>
        <position position="487"/>
    </location>
</feature>
<feature type="sequence conflict" description="In Ref. 18; AA sequence." evidence="68" ref="18">
    <original>Q</original>
    <variation>E</variation>
    <location>
        <position position="531"/>
    </location>
</feature>
<feature type="sequence conflict" description="In Ref. 14; AAH15822." evidence="68" ref="14">
    <original>V</original>
    <variation>E</variation>
    <location>
        <position position="537"/>
    </location>
</feature>
<feature type="sequence conflict" description="In Ref. 18; AA sequence and 27; AA sequence." evidence="68" ref="18 27">
    <original>K</original>
    <variation>R</variation>
    <location>
        <position position="694"/>
    </location>
</feature>
<feature type="strand" evidence="73">
    <location>
        <begin position="24"/>
        <end position="31"/>
    </location>
</feature>
<feature type="helix" evidence="73">
    <location>
        <begin position="32"/>
        <end position="47"/>
    </location>
</feature>
<feature type="strand" evidence="79">
    <location>
        <begin position="50"/>
        <end position="52"/>
    </location>
</feature>
<feature type="strand" evidence="73">
    <location>
        <begin position="53"/>
        <end position="57"/>
    </location>
</feature>
<feature type="helix" evidence="73">
    <location>
        <begin position="61"/>
        <end position="69"/>
    </location>
</feature>
<feature type="strand" evidence="73">
    <location>
        <begin position="75"/>
        <end position="78"/>
    </location>
</feature>
<feature type="helix" evidence="73">
    <location>
        <begin position="80"/>
        <end position="87"/>
    </location>
</feature>
<feature type="turn" evidence="73">
    <location>
        <begin position="89"/>
        <end position="91"/>
    </location>
</feature>
<feature type="strand" evidence="73">
    <location>
        <begin position="93"/>
        <end position="102"/>
    </location>
</feature>
<feature type="strand" evidence="73">
    <location>
        <begin position="104"/>
        <end position="118"/>
    </location>
</feature>
<feature type="strand" evidence="77">
    <location>
        <begin position="119"/>
        <end position="121"/>
    </location>
</feature>
<feature type="helix" evidence="73">
    <location>
        <begin position="125"/>
        <end position="127"/>
    </location>
</feature>
<feature type="strand" evidence="73">
    <location>
        <begin position="132"/>
        <end position="136"/>
    </location>
</feature>
<feature type="turn" evidence="73">
    <location>
        <begin position="141"/>
        <end position="144"/>
    </location>
</feature>
<feature type="helix" evidence="73">
    <location>
        <begin position="145"/>
        <end position="151"/>
    </location>
</feature>
<feature type="helix" evidence="73">
    <location>
        <begin position="152"/>
        <end position="154"/>
    </location>
</feature>
<feature type="turn" evidence="74">
    <location>
        <begin position="159"/>
        <end position="161"/>
    </location>
</feature>
<feature type="helix" evidence="73">
    <location>
        <begin position="164"/>
        <end position="171"/>
    </location>
</feature>
<feature type="strand" evidence="73">
    <location>
        <begin position="172"/>
        <end position="176"/>
    </location>
</feature>
<feature type="turn" evidence="73">
    <location>
        <begin position="182"/>
        <end position="184"/>
    </location>
</feature>
<feature type="helix" evidence="73">
    <location>
        <begin position="186"/>
        <end position="188"/>
    </location>
</feature>
<feature type="turn" evidence="73">
    <location>
        <begin position="189"/>
        <end position="191"/>
    </location>
</feature>
<feature type="helix" evidence="73">
    <location>
        <begin position="196"/>
        <end position="198"/>
    </location>
</feature>
<feature type="strand" evidence="78">
    <location>
        <begin position="206"/>
        <end position="208"/>
    </location>
</feature>
<feature type="helix" evidence="73">
    <location>
        <begin position="210"/>
        <end position="219"/>
    </location>
</feature>
<feature type="strand" evidence="73">
    <location>
        <begin position="224"/>
        <end position="229"/>
    </location>
</feature>
<feature type="helix" evidence="73">
    <location>
        <begin position="232"/>
        <end position="236"/>
    </location>
</feature>
<feature type="helix" evidence="73">
    <location>
        <begin position="240"/>
        <end position="243"/>
    </location>
</feature>
<feature type="strand" evidence="73">
    <location>
        <begin position="246"/>
        <end position="250"/>
    </location>
</feature>
<feature type="turn" evidence="73">
    <location>
        <begin position="251"/>
        <end position="253"/>
    </location>
</feature>
<feature type="strand" evidence="73">
    <location>
        <begin position="254"/>
        <end position="257"/>
    </location>
</feature>
<feature type="helix" evidence="73">
    <location>
        <begin position="258"/>
        <end position="263"/>
    </location>
</feature>
<feature type="strand" evidence="73">
    <location>
        <begin position="266"/>
        <end position="270"/>
    </location>
</feature>
<feature type="strand" evidence="73">
    <location>
        <begin position="273"/>
        <end position="280"/>
    </location>
</feature>
<feature type="helix" evidence="73">
    <location>
        <begin position="283"/>
        <end position="297"/>
    </location>
</feature>
<feature type="turn" evidence="73">
    <location>
        <begin position="299"/>
        <end position="301"/>
    </location>
</feature>
<feature type="strand" evidence="80">
    <location>
        <begin position="302"/>
        <end position="304"/>
    </location>
</feature>
<feature type="strand" evidence="73">
    <location>
        <begin position="317"/>
        <end position="319"/>
    </location>
</feature>
<feature type="strand" evidence="73">
    <location>
        <begin position="325"/>
        <end position="328"/>
    </location>
</feature>
<feature type="helix" evidence="73">
    <location>
        <begin position="335"/>
        <end position="339"/>
    </location>
</feature>
<feature type="helix" evidence="76">
    <location>
        <begin position="341"/>
        <end position="348"/>
    </location>
</feature>
<feature type="helix" evidence="76">
    <location>
        <begin position="349"/>
        <end position="351"/>
    </location>
</feature>
<feature type="helix" evidence="72">
    <location>
        <begin position="354"/>
        <end position="362"/>
    </location>
</feature>
<feature type="strand" evidence="72">
    <location>
        <begin position="363"/>
        <end position="370"/>
    </location>
</feature>
<feature type="helix" evidence="72">
    <location>
        <begin position="371"/>
        <end position="383"/>
    </location>
</feature>
<feature type="turn" evidence="72">
    <location>
        <begin position="384"/>
        <end position="386"/>
    </location>
</feature>
<feature type="strand" evidence="72">
    <location>
        <begin position="387"/>
        <end position="395"/>
    </location>
</feature>
<feature type="helix" evidence="72">
    <location>
        <begin position="396"/>
        <end position="404"/>
    </location>
</feature>
<feature type="strand" evidence="72">
    <location>
        <begin position="410"/>
        <end position="413"/>
    </location>
</feature>
<feature type="helix" evidence="72">
    <location>
        <begin position="415"/>
        <end position="423"/>
    </location>
</feature>
<feature type="strand" evidence="72">
    <location>
        <begin position="427"/>
        <end position="434"/>
    </location>
</feature>
<feature type="strand" evidence="72">
    <location>
        <begin position="436"/>
        <end position="439"/>
    </location>
</feature>
<feature type="strand" evidence="71">
    <location>
        <begin position="440"/>
        <end position="442"/>
    </location>
</feature>
<feature type="helix" evidence="72">
    <location>
        <begin position="446"/>
        <end position="448"/>
    </location>
</feature>
<feature type="strand" evidence="72">
    <location>
        <begin position="454"/>
        <end position="463"/>
    </location>
</feature>
<feature type="helix" evidence="72">
    <location>
        <begin position="469"/>
        <end position="471"/>
    </location>
</feature>
<feature type="strand" evidence="72">
    <location>
        <begin position="475"/>
        <end position="480"/>
    </location>
</feature>
<feature type="turn" evidence="72">
    <location>
        <begin position="485"/>
        <end position="488"/>
    </location>
</feature>
<feature type="helix" evidence="72">
    <location>
        <begin position="489"/>
        <end position="499"/>
    </location>
</feature>
<feature type="helix" evidence="72">
    <location>
        <begin position="504"/>
        <end position="506"/>
    </location>
</feature>
<feature type="strand" evidence="72">
    <location>
        <begin position="508"/>
        <end position="512"/>
    </location>
</feature>
<feature type="strand" evidence="76">
    <location>
        <begin position="514"/>
        <end position="516"/>
    </location>
</feature>
<feature type="helix" evidence="72">
    <location>
        <begin position="521"/>
        <end position="523"/>
    </location>
</feature>
<feature type="turn" evidence="75">
    <location>
        <begin position="533"/>
        <end position="536"/>
    </location>
</feature>
<feature type="helix" evidence="72">
    <location>
        <begin position="546"/>
        <end position="555"/>
    </location>
</feature>
<feature type="strand" evidence="72">
    <location>
        <begin position="560"/>
        <end position="565"/>
    </location>
</feature>
<feature type="helix" evidence="72">
    <location>
        <begin position="566"/>
        <end position="570"/>
    </location>
</feature>
<feature type="strand" evidence="76">
    <location>
        <begin position="573"/>
        <end position="576"/>
    </location>
</feature>
<feature type="helix" evidence="72">
    <location>
        <begin position="580"/>
        <end position="583"/>
    </location>
</feature>
<feature type="helix" evidence="72">
    <location>
        <begin position="587"/>
        <end position="589"/>
    </location>
</feature>
<feature type="strand" evidence="72">
    <location>
        <begin position="590"/>
        <end position="593"/>
    </location>
</feature>
<feature type="strand" evidence="72">
    <location>
        <begin position="599"/>
        <end position="601"/>
    </location>
</feature>
<feature type="helix" evidence="72">
    <location>
        <begin position="602"/>
        <end position="607"/>
    </location>
</feature>
<feature type="strand" evidence="72">
    <location>
        <begin position="610"/>
        <end position="613"/>
    </location>
</feature>
<feature type="strand" evidence="72">
    <location>
        <begin position="617"/>
        <end position="620"/>
    </location>
</feature>
<feature type="helix" evidence="72">
    <location>
        <begin position="622"/>
        <end position="624"/>
    </location>
</feature>
<feature type="helix" evidence="72">
    <location>
        <begin position="625"/>
        <end position="639"/>
    </location>
</feature>
<feature type="strand" evidence="78">
    <location>
        <begin position="640"/>
        <end position="642"/>
    </location>
</feature>
<feature type="turn" evidence="72">
    <location>
        <begin position="646"/>
        <end position="649"/>
    </location>
</feature>
<feature type="strand" evidence="72">
    <location>
        <begin position="655"/>
        <end position="657"/>
    </location>
</feature>
<feature type="strand" evidence="80">
    <location>
        <begin position="659"/>
        <end position="662"/>
    </location>
</feature>
<feature type="strand" evidence="72">
    <location>
        <begin position="666"/>
        <end position="670"/>
    </location>
</feature>
<feature type="helix" evidence="72">
    <location>
        <begin position="678"/>
        <end position="682"/>
    </location>
</feature>
<feature type="helix" evidence="72">
    <location>
        <begin position="684"/>
        <end position="696"/>
    </location>
</feature>
<feature type="helix" evidence="72">
    <location>
        <begin position="700"/>
        <end position="709"/>
    </location>
</feature>
<feature type="modified residue" description="Phosphoserine; alternate" evidence="36">
    <location sequence="P02788-2">
        <position position="10"/>
    </location>
</feature>
<feature type="glycosylation site" description="O-linked (GlcNAc) serine; alternate" evidence="36">
    <location sequence="P02788-2">
        <position position="10"/>
    </location>
</feature>
<feature type="cross-link" description="Glycyl lysine isopeptide (Lys-Gly) (interchain with G-Cter in ubiquitin)" evidence="36">
    <location sequence="P02788-2">
        <position position="379"/>
    </location>
</feature>
<feature type="cross-link" description="Glycyl lysine isopeptide (Lys-Gly) (interchain with G-Cter in ubiquitin)" evidence="36">
    <location sequence="P02788-2">
        <position position="391"/>
    </location>
</feature>
<proteinExistence type="evidence at protein level"/>
<dbReference type="EC" id="3.4.21.-" evidence="12"/>
<dbReference type="EMBL" id="X53961">
    <property type="protein sequence ID" value="CAA37914.1"/>
    <property type="molecule type" value="mRNA"/>
</dbReference>
<dbReference type="EMBL" id="U07643">
    <property type="protein sequence ID" value="AAB60324.1"/>
    <property type="molecule type" value="mRNA"/>
</dbReference>
<dbReference type="EMBL" id="AF332168">
    <property type="protein sequence ID" value="AAG48753.1"/>
    <property type="molecule type" value="mRNA"/>
</dbReference>
<dbReference type="EMBL" id="AY178998">
    <property type="protein sequence ID" value="AAN75578.2"/>
    <property type="molecule type" value="mRNA"/>
</dbReference>
<dbReference type="EMBL" id="AY137470">
    <property type="protein sequence ID" value="AAN11304.1"/>
    <property type="molecule type" value="mRNA"/>
</dbReference>
<dbReference type="EMBL" id="M73700">
    <property type="protein sequence ID" value="AAA59479.1"/>
    <property type="molecule type" value="Genomic_DNA"/>
</dbReference>
<dbReference type="EMBL" id="M93150">
    <property type="protein sequence ID" value="AAA36159.1"/>
    <property type="molecule type" value="mRNA"/>
</dbReference>
<dbReference type="EMBL" id="AY165046">
    <property type="protein sequence ID" value="AAN63998.1"/>
    <property type="molecule type" value="mRNA"/>
</dbReference>
<dbReference type="EMBL" id="AY493417">
    <property type="protein sequence ID" value="AAS72878.1"/>
    <property type="molecule type" value="mRNA"/>
</dbReference>
<dbReference type="EMBL" id="EU622050">
    <property type="protein sequence ID" value="ACC95966.1"/>
    <property type="molecule type" value="Genomic_DNA"/>
</dbReference>
<dbReference type="EMBL" id="AK292813">
    <property type="protein sequence ID" value="BAF85502.1"/>
    <property type="molecule type" value="mRNA"/>
</dbReference>
<dbReference type="EMBL" id="AK298035">
    <property type="protein sequence ID" value="BAH12708.1"/>
    <property type="molecule type" value="mRNA"/>
</dbReference>
<dbReference type="EMBL" id="AC098613">
    <property type="status" value="NOT_ANNOTATED_CDS"/>
    <property type="molecule type" value="Genomic_DNA"/>
</dbReference>
<dbReference type="EMBL" id="BC015822">
    <property type="protein sequence ID" value="AAH15822.1"/>
    <property type="molecule type" value="mRNA"/>
</dbReference>
<dbReference type="EMBL" id="BC015823">
    <property type="protein sequence ID" value="AAH15823.1"/>
    <property type="molecule type" value="mRNA"/>
</dbReference>
<dbReference type="EMBL" id="BC022347">
    <property type="protein sequence ID" value="AAH22347.1"/>
    <property type="molecule type" value="mRNA"/>
</dbReference>
<dbReference type="EMBL" id="S52659">
    <property type="protein sequence ID" value="AAB24877.1"/>
    <property type="molecule type" value="Genomic_DNA"/>
</dbReference>
<dbReference type="EMBL" id="X52941">
    <property type="protein sequence ID" value="CAA37116.1"/>
    <property type="molecule type" value="mRNA"/>
</dbReference>
<dbReference type="EMBL" id="M83202">
    <property type="protein sequence ID" value="AAA59511.1"/>
    <property type="molecule type" value="mRNA"/>
</dbReference>
<dbReference type="EMBL" id="M83205">
    <property type="protein sequence ID" value="AAA58656.1"/>
    <property type="molecule type" value="mRNA"/>
</dbReference>
<dbReference type="EMBL" id="U95626">
    <property type="protein sequence ID" value="AAB57795.1"/>
    <property type="molecule type" value="Genomic_DNA"/>
</dbReference>
<dbReference type="EMBL" id="M18642">
    <property type="protein sequence ID" value="AAA86665.1"/>
    <property type="molecule type" value="mRNA"/>
</dbReference>
<dbReference type="CCDS" id="CCDS33747.1">
    <molecule id="P02788-1"/>
</dbReference>
<dbReference type="CCDS" id="CCDS56251.1">
    <molecule id="P02788-2"/>
</dbReference>
<dbReference type="PIR" id="G01394">
    <property type="entry name" value="TFHUL"/>
</dbReference>
<dbReference type="RefSeq" id="NP_001186078.1">
    <molecule id="P02788-2"/>
    <property type="nucleotide sequence ID" value="NM_001199149.2"/>
</dbReference>
<dbReference type="RefSeq" id="NP_001308050.1">
    <property type="nucleotide sequence ID" value="NM_001321121.1"/>
</dbReference>
<dbReference type="RefSeq" id="NP_001308051.1">
    <property type="nucleotide sequence ID" value="NM_001321122.1"/>
</dbReference>
<dbReference type="RefSeq" id="NP_002334.2">
    <molecule id="P02788-1"/>
    <property type="nucleotide sequence ID" value="NM_002343.6"/>
</dbReference>
<dbReference type="PDB" id="1B0L">
    <property type="method" value="X-ray"/>
    <property type="resolution" value="2.20 A"/>
    <property type="chains" value="A=20-710"/>
</dbReference>
<dbReference type="PDB" id="1BKA">
    <property type="method" value="X-ray"/>
    <property type="resolution" value="2.40 A"/>
    <property type="chains" value="A=20-710"/>
</dbReference>
<dbReference type="PDB" id="1CB6">
    <property type="method" value="X-ray"/>
    <property type="resolution" value="2.00 A"/>
    <property type="chains" value="A=20-710"/>
</dbReference>
<dbReference type="PDB" id="1DSN">
    <property type="method" value="X-ray"/>
    <property type="resolution" value="2.05 A"/>
    <property type="chains" value="A=21-352"/>
</dbReference>
<dbReference type="PDB" id="1EH3">
    <property type="method" value="X-ray"/>
    <property type="resolution" value="2.00 A"/>
    <property type="chains" value="A=21-352"/>
</dbReference>
<dbReference type="PDB" id="1FCK">
    <property type="method" value="X-ray"/>
    <property type="resolution" value="2.20 A"/>
    <property type="chains" value="A=21-710"/>
</dbReference>
<dbReference type="PDB" id="1H43">
    <property type="method" value="X-ray"/>
    <property type="resolution" value="2.20 A"/>
    <property type="chains" value="A=21-352"/>
</dbReference>
<dbReference type="PDB" id="1H44">
    <property type="method" value="X-ray"/>
    <property type="resolution" value="2.00 A"/>
    <property type="chains" value="A=21-352"/>
</dbReference>
<dbReference type="PDB" id="1H45">
    <property type="method" value="X-ray"/>
    <property type="resolution" value="1.95 A"/>
    <property type="chains" value="A=21-352"/>
</dbReference>
<dbReference type="PDB" id="1HSE">
    <property type="method" value="X-ray"/>
    <property type="resolution" value="2.20 A"/>
    <property type="chains" value="A=21-353"/>
</dbReference>
<dbReference type="PDB" id="1L5T">
    <property type="method" value="X-ray"/>
    <property type="resolution" value="3.00 A"/>
    <property type="chains" value="A/B=21-351"/>
</dbReference>
<dbReference type="PDB" id="1LCF">
    <property type="method" value="X-ray"/>
    <property type="resolution" value="2.00 A"/>
    <property type="chains" value="A=20-710"/>
</dbReference>
<dbReference type="PDB" id="1LCT">
    <property type="method" value="X-ray"/>
    <property type="resolution" value="2.00 A"/>
    <property type="chains" value="A=21-352"/>
</dbReference>
<dbReference type="PDB" id="1LFG">
    <property type="method" value="X-ray"/>
    <property type="resolution" value="2.20 A"/>
    <property type="chains" value="A=20-710"/>
</dbReference>
<dbReference type="PDB" id="1LFH">
    <property type="method" value="X-ray"/>
    <property type="resolution" value="2.80 A"/>
    <property type="chains" value="A=20-710"/>
</dbReference>
<dbReference type="PDB" id="1LFI">
    <property type="method" value="X-ray"/>
    <property type="resolution" value="2.10 A"/>
    <property type="chains" value="A=20-710"/>
</dbReference>
<dbReference type="PDB" id="1LGB">
    <property type="method" value="X-ray"/>
    <property type="resolution" value="3.30 A"/>
    <property type="chains" value="C=110-268"/>
</dbReference>
<dbReference type="PDB" id="1N76">
    <property type="method" value="X-ray"/>
    <property type="resolution" value="3.40 A"/>
    <property type="chains" value="A=21-710"/>
</dbReference>
<dbReference type="PDB" id="1SQY">
    <property type="method" value="X-ray"/>
    <property type="resolution" value="2.50 A"/>
    <property type="chains" value="A=20-710"/>
</dbReference>
<dbReference type="PDB" id="1U62">
    <property type="method" value="NMR"/>
    <property type="chains" value="A=39-49"/>
</dbReference>
<dbReference type="PDB" id="1VFD">
    <property type="method" value="X-ray"/>
    <property type="resolution" value="2.50 A"/>
    <property type="chains" value="A=20-349"/>
</dbReference>
<dbReference type="PDB" id="1VFE">
    <property type="method" value="X-ray"/>
    <property type="resolution" value="2.30 A"/>
    <property type="chains" value="A=20-352"/>
</dbReference>
<dbReference type="PDB" id="1XV4">
    <property type="method" value="NMR"/>
    <property type="chains" value="A=39-49"/>
</dbReference>
<dbReference type="PDB" id="1XV7">
    <property type="method" value="NMR"/>
    <property type="chains" value="A=39-49"/>
</dbReference>
<dbReference type="PDB" id="1Z6V">
    <property type="method" value="NMR"/>
    <property type="chains" value="A=21-67"/>
</dbReference>
<dbReference type="PDB" id="1Z6W">
    <property type="method" value="NMR"/>
    <property type="chains" value="A=21-67"/>
</dbReference>
<dbReference type="PDB" id="2BJJ">
    <property type="method" value="X-ray"/>
    <property type="resolution" value="2.40 A"/>
    <property type="chains" value="X=21-710"/>
</dbReference>
<dbReference type="PDB" id="2DP4">
    <property type="method" value="X-ray"/>
    <property type="resolution" value="2.90 A"/>
    <property type="chains" value="I=528-535"/>
</dbReference>
<dbReference type="PDB" id="2GMC">
    <property type="method" value="NMR"/>
    <property type="chains" value="A=39-49"/>
</dbReference>
<dbReference type="PDB" id="2GMD">
    <property type="method" value="NMR"/>
    <property type="chains" value="A=39-49"/>
</dbReference>
<dbReference type="PDB" id="2HD4">
    <property type="method" value="X-ray"/>
    <property type="resolution" value="2.15 A"/>
    <property type="chains" value="B=528-535"/>
</dbReference>
<dbReference type="PDB" id="2PMS">
    <property type="method" value="X-ray"/>
    <property type="resolution" value="2.91 A"/>
    <property type="chains" value="A/B=21-362"/>
</dbReference>
<dbReference type="PDB" id="7JRD">
    <property type="method" value="X-ray"/>
    <property type="resolution" value="2.85 A"/>
    <property type="chains" value="B=21-710"/>
</dbReference>
<dbReference type="PDB" id="7N88">
    <property type="method" value="EM"/>
    <property type="resolution" value="3.70 A"/>
    <property type="chains" value="B=20-710"/>
</dbReference>
<dbReference type="PDBsum" id="1B0L"/>
<dbReference type="PDBsum" id="1BKA"/>
<dbReference type="PDBsum" id="1CB6"/>
<dbReference type="PDBsum" id="1DSN"/>
<dbReference type="PDBsum" id="1EH3"/>
<dbReference type="PDBsum" id="1FCK"/>
<dbReference type="PDBsum" id="1H43"/>
<dbReference type="PDBsum" id="1H44"/>
<dbReference type="PDBsum" id="1H45"/>
<dbReference type="PDBsum" id="1HSE"/>
<dbReference type="PDBsum" id="1L5T"/>
<dbReference type="PDBsum" id="1LCF"/>
<dbReference type="PDBsum" id="1LCT"/>
<dbReference type="PDBsum" id="1LFG"/>
<dbReference type="PDBsum" id="1LFH"/>
<dbReference type="PDBsum" id="1LFI"/>
<dbReference type="PDBsum" id="1LGB"/>
<dbReference type="PDBsum" id="1N76"/>
<dbReference type="PDBsum" id="1SQY"/>
<dbReference type="PDBsum" id="1U62"/>
<dbReference type="PDBsum" id="1VFD"/>
<dbReference type="PDBsum" id="1VFE"/>
<dbReference type="PDBsum" id="1XV4"/>
<dbReference type="PDBsum" id="1XV7"/>
<dbReference type="PDBsum" id="1Z6V"/>
<dbReference type="PDBsum" id="1Z6W"/>
<dbReference type="PDBsum" id="2BJJ"/>
<dbReference type="PDBsum" id="2DP4"/>
<dbReference type="PDBsum" id="2GMC"/>
<dbReference type="PDBsum" id="2GMD"/>
<dbReference type="PDBsum" id="2HD4"/>
<dbReference type="PDBsum" id="2PMS"/>
<dbReference type="PDBsum" id="7JRD"/>
<dbReference type="PDBsum" id="7N88"/>
<dbReference type="EMDB" id="EMD-24233"/>
<dbReference type="SASBDB" id="P02788"/>
<dbReference type="SMR" id="P02788"/>
<dbReference type="BioGRID" id="110235">
    <property type="interactions" value="177"/>
</dbReference>
<dbReference type="CORUM" id="P02788"/>
<dbReference type="DIP" id="DIP-41354N"/>
<dbReference type="FunCoup" id="P02788">
    <property type="interactions" value="885"/>
</dbReference>
<dbReference type="IntAct" id="P02788">
    <property type="interactions" value="104"/>
</dbReference>
<dbReference type="MINT" id="P02788"/>
<dbReference type="STRING" id="9606.ENSP00000231751"/>
<dbReference type="ChEMBL" id="CHEMBL4523161"/>
<dbReference type="DrugBank" id="DB06987">
    <property type="generic name" value="(R)-Atenolol"/>
</dbReference>
<dbReference type="DrugBank" id="DB01811">
    <property type="generic name" value="3h-Indole-5,6-Diol"/>
</dbReference>
<dbReference type="DrugBank" id="DB03485">
    <property type="generic name" value="alpha-D-Fucopyranose"/>
</dbReference>
<dbReference type="DrugBank" id="DB06784">
    <property type="generic name" value="Gallium citrate Ga-67"/>
</dbReference>
<dbReference type="DrugBank" id="DB03017">
    <property type="generic name" value="Lauric acid"/>
</dbReference>
<dbReference type="DrugBank" id="DB04743">
    <property type="generic name" value="Nimesulide"/>
</dbReference>
<dbReference type="DrugBank" id="DB03040">
    <property type="generic name" value="Nitrilotriacetic acid"/>
</dbReference>
<dbReference type="DrugBank" id="DB08439">
    <property type="generic name" value="Parecoxib"/>
</dbReference>
<dbReference type="DrugBank" id="DB11182">
    <property type="generic name" value="Rose bengal"/>
</dbReference>
<dbReference type="Allergome" id="1384">
    <property type="allergen name" value="Hom s LF"/>
</dbReference>
<dbReference type="MEROPS" id="S60.001"/>
<dbReference type="MEROPS" id="S60.970"/>
<dbReference type="GlyConnect" id="2842">
    <property type="glycosylation" value="5 N-Linked glycans"/>
</dbReference>
<dbReference type="GlyConnect" id="320">
    <property type="glycosylation" value="168 N-Linked glycans (3 sites), 2 O-Linked glycans (1 site)"/>
</dbReference>
<dbReference type="GlyCosmos" id="P02788">
    <property type="glycosylation" value="6 sites, 161 glycans"/>
</dbReference>
<dbReference type="GlyGen" id="P02788">
    <property type="glycosylation" value="5 sites, 249 N-linked glycans (4 sites), 2 O-linked glycans (1 site)"/>
</dbReference>
<dbReference type="iPTMnet" id="P02788"/>
<dbReference type="PhosphoSitePlus" id="P02788"/>
<dbReference type="BioMuta" id="LTF"/>
<dbReference type="DMDM" id="85700158"/>
<dbReference type="jPOST" id="P02788"/>
<dbReference type="MassIVE" id="P02788"/>
<dbReference type="PaxDb" id="9606-ENSP00000231751"/>
<dbReference type="PeptideAtlas" id="P02788"/>
<dbReference type="PRIDE" id="P02788"/>
<dbReference type="ProteomicsDB" id="51597">
    <molecule id="P02788-1"/>
</dbReference>
<dbReference type="ProteomicsDB" id="6642"/>
<dbReference type="Pumba" id="P02788"/>
<dbReference type="Antibodypedia" id="3271">
    <property type="antibodies" value="1456 antibodies from 45 providers"/>
</dbReference>
<dbReference type="DNASU" id="4057"/>
<dbReference type="Ensembl" id="ENST00000231751.9">
    <molecule id="P02788-1"/>
    <property type="protein sequence ID" value="ENSP00000231751.4"/>
    <property type="gene ID" value="ENSG00000012223.13"/>
</dbReference>
<dbReference type="Ensembl" id="ENST00000426532.6">
    <molecule id="P02788-2"/>
    <property type="protein sequence ID" value="ENSP00000405719.2"/>
    <property type="gene ID" value="ENSG00000012223.13"/>
</dbReference>
<dbReference type="GeneID" id="4057"/>
<dbReference type="KEGG" id="hsa:4057"/>
<dbReference type="MANE-Select" id="ENST00000231751.9">
    <property type="protein sequence ID" value="ENSP00000231751.4"/>
    <property type="RefSeq nucleotide sequence ID" value="NM_002343.6"/>
    <property type="RefSeq protein sequence ID" value="NP_002334.2"/>
</dbReference>
<dbReference type="UCSC" id="uc003fzr.4">
    <molecule id="P02788-1"/>
    <property type="organism name" value="human"/>
</dbReference>
<dbReference type="AGR" id="HGNC:6720"/>
<dbReference type="CTD" id="4057"/>
<dbReference type="DisGeNET" id="4057"/>
<dbReference type="GeneCards" id="LTF"/>
<dbReference type="HGNC" id="HGNC:6720">
    <property type="gene designation" value="LTF"/>
</dbReference>
<dbReference type="HPA" id="ENSG00000012223">
    <property type="expression patterns" value="Group enriched (bone marrow, salivary gland)"/>
</dbReference>
<dbReference type="MIM" id="150210">
    <property type="type" value="gene"/>
</dbReference>
<dbReference type="neXtProt" id="NX_P02788"/>
<dbReference type="OpenTargets" id="ENSG00000012223"/>
<dbReference type="PharmGKB" id="PA30482"/>
<dbReference type="VEuPathDB" id="HostDB:ENSG00000012223"/>
<dbReference type="eggNOG" id="ENOG502QT0C">
    <property type="taxonomic scope" value="Eukaryota"/>
</dbReference>
<dbReference type="GeneTree" id="ENSGT00940000156055"/>
<dbReference type="HOGENOM" id="CLU_011309_1_0_1"/>
<dbReference type="InParanoid" id="P02788"/>
<dbReference type="OMA" id="EAQPRTH"/>
<dbReference type="OrthoDB" id="5914301at2759"/>
<dbReference type="PAN-GO" id="P02788">
    <property type="GO annotations" value="6 GO annotations based on evolutionary models"/>
</dbReference>
<dbReference type="PhylomeDB" id="P02788"/>
<dbReference type="TreeFam" id="TF324013"/>
<dbReference type="PathwayCommons" id="P02788"/>
<dbReference type="Reactome" id="R-HSA-1222449">
    <property type="pathway name" value="Mtb iron assimilation by chelation"/>
</dbReference>
<dbReference type="Reactome" id="R-HSA-6798695">
    <property type="pathway name" value="Neutrophil degranulation"/>
</dbReference>
<dbReference type="Reactome" id="R-HSA-6799990">
    <property type="pathway name" value="Metal sequestration by antimicrobial proteins"/>
</dbReference>
<dbReference type="Reactome" id="R-HSA-6803157">
    <property type="pathway name" value="Antimicrobial peptides"/>
</dbReference>
<dbReference type="Reactome" id="R-HSA-977225">
    <property type="pathway name" value="Amyloid fiber formation"/>
</dbReference>
<dbReference type="SignaLink" id="P02788"/>
<dbReference type="SIGNOR" id="P02788"/>
<dbReference type="BioGRID-ORCS" id="4057">
    <property type="hits" value="47 hits in 1161 CRISPR screens"/>
</dbReference>
<dbReference type="ChiTaRS" id="LTF">
    <property type="organism name" value="human"/>
</dbReference>
<dbReference type="EvolutionaryTrace" id="P02788"/>
<dbReference type="GeneWiki" id="Lactoferrin"/>
<dbReference type="GenomeRNAi" id="4057"/>
<dbReference type="Pharos" id="P02788">
    <property type="development level" value="Tbio"/>
</dbReference>
<dbReference type="PRO" id="PR:P02788"/>
<dbReference type="Proteomes" id="UP000005640">
    <property type="component" value="Chromosome 3"/>
</dbReference>
<dbReference type="RNAct" id="P02788">
    <property type="molecule type" value="protein"/>
</dbReference>
<dbReference type="Bgee" id="ENSG00000012223">
    <property type="expression patterns" value="Expressed in trachea and 144 other cell types or tissues"/>
</dbReference>
<dbReference type="ExpressionAtlas" id="P02788">
    <property type="expression patterns" value="baseline and differential"/>
</dbReference>
<dbReference type="GO" id="GO:0009986">
    <property type="term" value="C:cell surface"/>
    <property type="evidence" value="ECO:0000314"/>
    <property type="project" value="UniProtKB"/>
</dbReference>
<dbReference type="GO" id="GO:0005737">
    <property type="term" value="C:cytoplasm"/>
    <property type="evidence" value="ECO:0000315"/>
    <property type="project" value="AgBase"/>
</dbReference>
<dbReference type="GO" id="GO:0005769">
    <property type="term" value="C:early endosome"/>
    <property type="evidence" value="ECO:0000318"/>
    <property type="project" value="GO_Central"/>
</dbReference>
<dbReference type="GO" id="GO:0070062">
    <property type="term" value="C:extracellular exosome"/>
    <property type="evidence" value="ECO:0007005"/>
    <property type="project" value="UniProtKB"/>
</dbReference>
<dbReference type="GO" id="GO:0005576">
    <property type="term" value="C:extracellular region"/>
    <property type="evidence" value="ECO:0000304"/>
    <property type="project" value="Reactome"/>
</dbReference>
<dbReference type="GO" id="GO:0005615">
    <property type="term" value="C:extracellular space"/>
    <property type="evidence" value="ECO:0000314"/>
    <property type="project" value="UniProtKB"/>
</dbReference>
<dbReference type="GO" id="GO:0005634">
    <property type="term" value="C:nucleus"/>
    <property type="evidence" value="ECO:0007005"/>
    <property type="project" value="UniProtKB"/>
</dbReference>
<dbReference type="GO" id="GO:0097013">
    <property type="term" value="C:phagocytic vesicle lumen"/>
    <property type="evidence" value="ECO:0000304"/>
    <property type="project" value="Reactome"/>
</dbReference>
<dbReference type="GO" id="GO:0005886">
    <property type="term" value="C:plasma membrane"/>
    <property type="evidence" value="ECO:0000318"/>
    <property type="project" value="GO_Central"/>
</dbReference>
<dbReference type="GO" id="GO:0032991">
    <property type="term" value="C:protein-containing complex"/>
    <property type="evidence" value="ECO:0000314"/>
    <property type="project" value="UniProtKB"/>
</dbReference>
<dbReference type="GO" id="GO:0055037">
    <property type="term" value="C:recycling endosome"/>
    <property type="evidence" value="ECO:0000318"/>
    <property type="project" value="GO_Central"/>
</dbReference>
<dbReference type="GO" id="GO:0030141">
    <property type="term" value="C:secretory granule"/>
    <property type="evidence" value="ECO:0000314"/>
    <property type="project" value="MGI"/>
</dbReference>
<dbReference type="GO" id="GO:0042581">
    <property type="term" value="C:specific granule"/>
    <property type="evidence" value="ECO:0000314"/>
    <property type="project" value="UniProtKB"/>
</dbReference>
<dbReference type="GO" id="GO:0035580">
    <property type="term" value="C:specific granule lumen"/>
    <property type="evidence" value="ECO:0000304"/>
    <property type="project" value="Reactome"/>
</dbReference>
<dbReference type="GO" id="GO:1904724">
    <property type="term" value="C:tertiary granule lumen"/>
    <property type="evidence" value="ECO:0000304"/>
    <property type="project" value="Reactome"/>
</dbReference>
<dbReference type="GO" id="GO:0004869">
    <property type="term" value="F:cysteine-type endopeptidase inhibitor activity"/>
    <property type="evidence" value="ECO:0000314"/>
    <property type="project" value="CAFA"/>
</dbReference>
<dbReference type="GO" id="GO:0003677">
    <property type="term" value="F:DNA binding"/>
    <property type="evidence" value="ECO:0007669"/>
    <property type="project" value="UniProtKB-KW"/>
</dbReference>
<dbReference type="GO" id="GO:0008201">
    <property type="term" value="F:heparin binding"/>
    <property type="evidence" value="ECO:0000314"/>
    <property type="project" value="MGI"/>
</dbReference>
<dbReference type="GO" id="GO:0005506">
    <property type="term" value="F:iron ion binding"/>
    <property type="evidence" value="ECO:0000314"/>
    <property type="project" value="UniProtKB"/>
</dbReference>
<dbReference type="GO" id="GO:0001530">
    <property type="term" value="F:lipopolysaccharide binding"/>
    <property type="evidence" value="ECO:0000315"/>
    <property type="project" value="UniProtKB"/>
</dbReference>
<dbReference type="GO" id="GO:0140912">
    <property type="term" value="F:membrane destabilizing activity"/>
    <property type="evidence" value="ECO:0000315"/>
    <property type="project" value="GO_Central"/>
</dbReference>
<dbReference type="GO" id="GO:0043539">
    <property type="term" value="F:protein serine/threonine kinase activator activity"/>
    <property type="evidence" value="ECO:0000314"/>
    <property type="project" value="UniProtKB"/>
</dbReference>
<dbReference type="GO" id="GO:0004252">
    <property type="term" value="F:serine-type endopeptidase activity"/>
    <property type="evidence" value="ECO:0000304"/>
    <property type="project" value="ProtInc"/>
</dbReference>
<dbReference type="GO" id="GO:0019731">
    <property type="term" value="P:antibacterial humoral response"/>
    <property type="evidence" value="ECO:0000314"/>
    <property type="project" value="UniProtKB"/>
</dbReference>
<dbReference type="GO" id="GO:0019732">
    <property type="term" value="P:antifungal humoral response"/>
    <property type="evidence" value="ECO:0000314"/>
    <property type="project" value="UniProtKB"/>
</dbReference>
<dbReference type="GO" id="GO:0061844">
    <property type="term" value="P:antimicrobial humoral immune response mediated by antimicrobial peptide"/>
    <property type="evidence" value="ECO:0000315"/>
    <property type="project" value="UniProtKB"/>
</dbReference>
<dbReference type="GO" id="GO:0060349">
    <property type="term" value="P:bone morphogenesis"/>
    <property type="evidence" value="ECO:0000314"/>
    <property type="project" value="UniProtKB"/>
</dbReference>
<dbReference type="GO" id="GO:0050829">
    <property type="term" value="P:defense response to Gram-negative bacterium"/>
    <property type="evidence" value="ECO:0000315"/>
    <property type="project" value="UniProtKB"/>
</dbReference>
<dbReference type="GO" id="GO:0006959">
    <property type="term" value="P:humoral immune response"/>
    <property type="evidence" value="ECO:0000304"/>
    <property type="project" value="ProtInc"/>
</dbReference>
<dbReference type="GO" id="GO:0002227">
    <property type="term" value="P:innate immune response in mucosa"/>
    <property type="evidence" value="ECO:0000314"/>
    <property type="project" value="UniProtKB"/>
</dbReference>
<dbReference type="GO" id="GO:0006826">
    <property type="term" value="P:iron ion transport"/>
    <property type="evidence" value="ECO:0000318"/>
    <property type="project" value="GO_Central"/>
</dbReference>
<dbReference type="GO" id="GO:0031640">
    <property type="term" value="P:killing of cells of another organism"/>
    <property type="evidence" value="ECO:0000314"/>
    <property type="project" value="UniProtKB"/>
</dbReference>
<dbReference type="GO" id="GO:0044793">
    <property type="term" value="P:negative regulation by host of viral process"/>
    <property type="evidence" value="ECO:0000315"/>
    <property type="project" value="AgBase"/>
</dbReference>
<dbReference type="GO" id="GO:0043066">
    <property type="term" value="P:negative regulation of apoptotic process"/>
    <property type="evidence" value="ECO:0000250"/>
    <property type="project" value="UniProtKB"/>
</dbReference>
<dbReference type="GO" id="GO:0032780">
    <property type="term" value="P:negative regulation of ATP-dependent activity"/>
    <property type="evidence" value="ECO:0000315"/>
    <property type="project" value="AgBase"/>
</dbReference>
<dbReference type="GO" id="GO:0031665">
    <property type="term" value="P:negative regulation of lipopolysaccharide-mediated signaling pathway"/>
    <property type="evidence" value="ECO:0000314"/>
    <property type="project" value="UniProtKB"/>
</dbReference>
<dbReference type="GO" id="GO:2001205">
    <property type="term" value="P:negative regulation of osteoclast development"/>
    <property type="evidence" value="ECO:0000250"/>
    <property type="project" value="UniProtKB"/>
</dbReference>
<dbReference type="GO" id="GO:1900229">
    <property type="term" value="P:negative regulation of single-species biofilm formation in or on host organism"/>
    <property type="evidence" value="ECO:0000314"/>
    <property type="project" value="UniProtKB"/>
</dbReference>
<dbReference type="GO" id="GO:2000308">
    <property type="term" value="P:negative regulation of tumor necrosis factor (ligand) superfamily member 11 production"/>
    <property type="evidence" value="ECO:0000250"/>
    <property type="project" value="UniProtKB"/>
</dbReference>
<dbReference type="GO" id="GO:0045071">
    <property type="term" value="P:negative regulation of viral genome replication"/>
    <property type="evidence" value="ECO:0000315"/>
    <property type="project" value="AgBase"/>
</dbReference>
<dbReference type="GO" id="GO:0048525">
    <property type="term" value="P:negative regulation of viral process"/>
    <property type="evidence" value="ECO:0000315"/>
    <property type="project" value="AgBase"/>
</dbReference>
<dbReference type="GO" id="GO:0001503">
    <property type="term" value="P:ossification"/>
    <property type="evidence" value="ECO:0007669"/>
    <property type="project" value="UniProtKB-KW"/>
</dbReference>
<dbReference type="GO" id="GO:1900159">
    <property type="term" value="P:positive regulation of bone mineralization involved in bone maturation"/>
    <property type="evidence" value="ECO:0000250"/>
    <property type="project" value="UniProtKB"/>
</dbReference>
<dbReference type="GO" id="GO:0043123">
    <property type="term" value="P:positive regulation of canonical NF-kappaB signal transduction"/>
    <property type="evidence" value="ECO:0000314"/>
    <property type="project" value="UniProtKB"/>
</dbReference>
<dbReference type="GO" id="GO:1902732">
    <property type="term" value="P:positive regulation of chondrocyte proliferation"/>
    <property type="evidence" value="ECO:0000314"/>
    <property type="project" value="UniProtKB"/>
</dbReference>
<dbReference type="GO" id="GO:0051092">
    <property type="term" value="P:positive regulation of NF-kappaB transcription factor activity"/>
    <property type="evidence" value="ECO:0000314"/>
    <property type="project" value="UniProtKB"/>
</dbReference>
<dbReference type="GO" id="GO:0045669">
    <property type="term" value="P:positive regulation of osteoblast differentiation"/>
    <property type="evidence" value="ECO:0000314"/>
    <property type="project" value="UniProtKB"/>
</dbReference>
<dbReference type="GO" id="GO:0033690">
    <property type="term" value="P:positive regulation of osteoblast proliferation"/>
    <property type="evidence" value="ECO:0000314"/>
    <property type="project" value="UniProtKB"/>
</dbReference>
<dbReference type="GO" id="GO:0071902">
    <property type="term" value="P:positive regulation of protein serine/threonine kinase activity"/>
    <property type="evidence" value="ECO:0000314"/>
    <property type="project" value="UniProtKB"/>
</dbReference>
<dbReference type="GO" id="GO:0034145">
    <property type="term" value="P:positive regulation of toll-like receptor 4 signaling pathway"/>
    <property type="evidence" value="ECO:0000315"/>
    <property type="project" value="UniProtKB"/>
</dbReference>
<dbReference type="GO" id="GO:0006508">
    <property type="term" value="P:proteolysis"/>
    <property type="evidence" value="ECO:0007669"/>
    <property type="project" value="UniProtKB-KW"/>
</dbReference>
<dbReference type="GO" id="GO:0001817">
    <property type="term" value="P:regulation of cytokine production"/>
    <property type="evidence" value="ECO:0000314"/>
    <property type="project" value="UniProtKB"/>
</dbReference>
<dbReference type="GO" id="GO:0032680">
    <property type="term" value="P:regulation of tumor necrosis factor production"/>
    <property type="evidence" value="ECO:0000314"/>
    <property type="project" value="UniProtKB"/>
</dbReference>
<dbReference type="CDD" id="cd13617">
    <property type="entry name" value="PBP2_transferrin_C"/>
    <property type="match status" value="1"/>
</dbReference>
<dbReference type="CDD" id="cd13618">
    <property type="entry name" value="PBP2_transferrin_N"/>
    <property type="match status" value="1"/>
</dbReference>
<dbReference type="DisProt" id="DP00616"/>
<dbReference type="FunFam" id="3.40.190.10:FF:000095">
    <property type="entry name" value="Lactotransferrin"/>
    <property type="match status" value="1"/>
</dbReference>
<dbReference type="FunFam" id="3.40.190.10:FF:000105">
    <property type="entry name" value="Serotransferrin"/>
    <property type="match status" value="1"/>
</dbReference>
<dbReference type="Gene3D" id="3.40.190.10">
    <property type="entry name" value="Periplasmic binding protein-like II"/>
    <property type="match status" value="4"/>
</dbReference>
<dbReference type="InterPro" id="IPR030684">
    <property type="entry name" value="Lactotransferrin"/>
</dbReference>
<dbReference type="InterPro" id="IPR016357">
    <property type="entry name" value="Transferrin"/>
</dbReference>
<dbReference type="InterPro" id="IPR001156">
    <property type="entry name" value="Transferrin-like_dom"/>
</dbReference>
<dbReference type="InterPro" id="IPR018195">
    <property type="entry name" value="Transferrin_Fe_BS"/>
</dbReference>
<dbReference type="PANTHER" id="PTHR11485:SF55">
    <property type="entry name" value="LACTOTRANSFERRIN"/>
    <property type="match status" value="1"/>
</dbReference>
<dbReference type="PANTHER" id="PTHR11485">
    <property type="entry name" value="TRANSFERRIN"/>
    <property type="match status" value="1"/>
</dbReference>
<dbReference type="Pfam" id="PF00405">
    <property type="entry name" value="Transferrin"/>
    <property type="match status" value="2"/>
</dbReference>
<dbReference type="PIRSF" id="PIRSF500683">
    <property type="entry name" value="Lactotransferrin"/>
    <property type="match status" value="1"/>
</dbReference>
<dbReference type="PIRSF" id="PIRSF002549">
    <property type="entry name" value="Transferrin"/>
    <property type="match status" value="1"/>
</dbReference>
<dbReference type="PRINTS" id="PR00422">
    <property type="entry name" value="TRANSFERRIN"/>
</dbReference>
<dbReference type="SMART" id="SM00094">
    <property type="entry name" value="TR_FER"/>
    <property type="match status" value="2"/>
</dbReference>
<dbReference type="SUPFAM" id="SSF53850">
    <property type="entry name" value="Periplasmic binding protein-like II"/>
    <property type="match status" value="2"/>
</dbReference>
<dbReference type="PROSITE" id="PS00205">
    <property type="entry name" value="TRANSFERRIN_LIKE_1"/>
    <property type="match status" value="2"/>
</dbReference>
<dbReference type="PROSITE" id="PS00206">
    <property type="entry name" value="TRANSFERRIN_LIKE_2"/>
    <property type="match status" value="2"/>
</dbReference>
<dbReference type="PROSITE" id="PS00207">
    <property type="entry name" value="TRANSFERRIN_LIKE_3"/>
    <property type="match status" value="2"/>
</dbReference>
<dbReference type="PROSITE" id="PS51408">
    <property type="entry name" value="TRANSFERRIN_LIKE_4"/>
    <property type="match status" value="2"/>
</dbReference>
<name>TRFL_HUMAN</name>
<comment type="function">
    <text evidence="39">Transferrins are iron binding transport proteins which can bind two Fe(3+) ions in association with the binding of an anion, usually bicarbonate.</text>
</comment>
<comment type="function">
    <molecule>Lactotransferrin</molecule>
    <text evidence="5 7 10 13 15 17 24 27 28 29 33 35 45 46 54">Major iron-binding and multifunctional protein found in exocrine fluids such as breast milk and mucosal secretions (PubMed:11179314, PubMed:12693969, PubMed:14573629, PubMed:1599934, PubMed:3169987, PubMed:6802759). Has antimicrobial activity, which depends on the extracellular cation concentration (PubMed:6802759). Antimicrobial properties include bacteriostasis, which is related to its ability to sequester free iron and thus inhibit microbial growth, as well as direct bactericidal properties leading to the release of lipopolysaccharides from the bacterial outer membrane (PubMed:11179314, PubMed:12693969, PubMed:14573629, PubMed:1599934, PubMed:3169987, PubMed:6802759). Can also prevent bacterial biofilm development in P.aeruginosa infection (PubMed:12037568). Has weak antifungal activity against C.albicans (PubMed:11083624). Has anabolic, differentiating and anti-apoptotic effects on osteoblasts and can also inhibit osteoclastogenesis, possibly playing a role in the regulation of bone growth (PubMed:15166119). Promotes binding of species C adenoviruses to epithelial cells, promoting adenovirus infection (PubMed:17079302). Can inhibit papillomavirus infections (PubMed:17481742). Stimulates the TLR4 signaling pathway leading to NF-kappa-B activation and subsequent pro-inflammatory cytokine production while also interfering with the lipopolysaccharide (LPS)-stimulated TLR4 signaling (PubMed:20345905). Inhibits neutrophil granulocyte migration to sites of apoptosis, when secreted by apoptotic cells (PubMed:19033648). Stimulates VEGFA-mediated endothelial cell migration and proliferation (PubMed:16842782). Binds heparin, chondroitin sulfate and possibly other glycosaminoglycans (GAGs) (PubMed:9359845). Also binds specifically to pneumococcal surface protein A (PspA), the lipid A portion of bacterial lipopolysaccharide (LPS), lysozyme and DNA (PubMed:9359845).</text>
</comment>
<comment type="function">
    <text evidence="5 29">Lactoferricin binds to the bacterial surface and is crucial for the bactericidal functions. Has some antiviral activity against papillomavirus infection (PubMed:17481742). N-terminal region shows strong antifungal activity against C.albicans (PubMed:11083624). Contains two BBXB heparin-binding consensus sequences that appear to form the predominate functional GAG-binding site.</text>
</comment>
<comment type="function">
    <molecule>Kaliocin-1</molecule>
    <text evidence="13">Has antimicrobial activity and is able to permeabilize different ions through liposomal membranes.</text>
</comment>
<comment type="function">
    <molecule>Lactoferroxin-A</molecule>
    <text evidence="14">Has opioid antagonist activity (PubMed:1369293). Shows preference for mu-receptor (PubMed:1369293).</text>
</comment>
<comment type="function">
    <molecule>Lactoferroxin-B</molecule>
    <text evidence="14">Has opioid antagonist activity (PubMed:1369293). Shows higher degrees of preference for kappa-receptors than for mu-receptors (PubMed:1369293).</text>
</comment>
<comment type="function">
    <molecule>Lactoferroxin-C</molecule>
    <text evidence="14">Has opioid antagonist activity (PubMed:1369293). Shows higher degrees of preference for kappa-receptors than for mu-receptors (PubMed:1369293).</text>
</comment>
<comment type="function">
    <text evidence="12">The lactotransferrin transferrin-like domain 1 functions as a serine protease of the peptidase S60 family that cuts arginine rich regions (PubMed:12535064). This function contributes to the antimicrobial activity (PubMed:12535064). Shows a preferential cleavage at -Arg-Ser-Arg-Arg-|- and -Arg-Arg-Ser-Arg-|-, and of Z-Phe-Arg-|-aminomethylcoumarin sites (PubMed:12535064).</text>
</comment>
<comment type="function">
    <molecule>Isoform DeltaLf</molecule>
    <text evidence="18 37">Transcription factor with antiproliferative properties and ability to induce cell cycle arrest (PubMed:15222485). Binds to the DeltaLf response element found in the SKP1, BAX, DCPS, and SELENOH promoters (PubMed:22320386).</text>
</comment>
<comment type="subunit">
    <text evidence="2 4 6 11 19 20 22 23 26 30 31 39 41 48 49 50 51 52 61 62 63">Monomer. Found in a complex with LTF, CLU, EPPIN and SEMG1. Found in a complex with MPO and LTF; interacts directly with CP, allows Fe(3+) incorporation into LTF and activation of CP ferroxidase activity (PubMed:23843990).</text>
</comment>
<comment type="interaction">
    <interactant intactId="EBI-1058602">
        <id>P02788</id>
    </interactant>
    <interactant intactId="EBI-397403">
        <id>P62157</id>
        <label>CALM</label>
    </interactant>
    <organismsDiffer>true</organismsDiffer>
    <experiments>2</experiments>
</comment>
<comment type="interaction">
    <interactant intactId="EBI-1058602">
        <id>P02788</id>
    </interactant>
    <interactant intactId="EBI-2259469">
        <id>P75358</id>
        <label>gapA</label>
    </interactant>
    <organismsDiffer>true</organismsDiffer>
    <experiments>3</experiments>
</comment>
<comment type="interaction">
    <interactant intactId="EBI-1058602">
        <id>P02788</id>
    </interactant>
    <interactant intactId="EBI-2259629">
        <id>P75390</id>
        <label>pdhA</label>
    </interactant>
    <organismsDiffer>true</organismsDiffer>
    <experiments>3</experiments>
</comment>
<comment type="interaction">
    <interactant intactId="EBI-1058602">
        <id>P02788</id>
    </interactant>
    <interactant intactId="EBI-2259621">
        <id>P75391</id>
        <label>pdhB</label>
    </interactant>
    <organismsDiffer>true</organismsDiffer>
    <experiments>3</experiments>
</comment>
<comment type="interaction">
    <interactant intactId="EBI-1058602">
        <id>P02788</id>
    </interactant>
    <interactant intactId="EBI-2259593">
        <id>P75392</id>
        <label>pdhC</label>
    </interactant>
    <organismsDiffer>true</organismsDiffer>
    <experiments>3</experiments>
</comment>
<comment type="interaction">
    <interactant intactId="EBI-1058602">
        <id>P02788</id>
    </interactant>
    <interactant intactId="EBI-2259473">
        <id>P78031</id>
        <label>pyk</label>
    </interactant>
    <organismsDiffer>true</organismsDiffer>
    <experiments>3</experiments>
</comment>
<comment type="interaction">
    <interactant intactId="EBI-1058602">
        <id>P02788</id>
    </interactant>
    <interactant intactId="EBI-6904259">
        <id>PRO_0000037569</id>
        <dbReference type="UniProtKB" id="P27958"/>
    </interactant>
    <organismsDiffer>true</organismsDiffer>
    <experiments>3</experiments>
</comment>
<comment type="interaction">
    <interactant intactId="EBI-1058602">
        <id>P02788</id>
    </interactant>
    <interactant intactId="EBI-6904269">
        <id>PRO_0000037570</id>
        <dbReference type="UniProtKB" id="P27958"/>
    </interactant>
    <organismsDiffer>true</organismsDiffer>
    <experiments>9</experiments>
</comment>
<comment type="subcellular location">
    <molecule>Isoform 1</molecule>
    <subcellularLocation>
        <location>Secreted</location>
    </subcellularLocation>
    <subcellularLocation>
        <location>Cytoplasmic granule</location>
    </subcellularLocation>
    <text>Secreted into most exocrine fluids by various endothelial cells. Stored in the secondary granules of neutrophils.</text>
</comment>
<comment type="subcellular location">
    <molecule>Isoform DeltaLf</molecule>
    <subcellularLocation>
        <location>Cytoplasm</location>
    </subcellularLocation>
    <subcellularLocation>
        <location>Nucleus</location>
    </subcellularLocation>
    <text>Mainly localized in the cytoplasm.</text>
</comment>
<comment type="alternative products">
    <event type="alternative promoter"/>
    <isoform>
        <id>P02788-1</id>
        <name>1</name>
        <sequence type="displayed"/>
    </isoform>
    <isoform>
        <id>P02788-2</id>
        <name>DeltaLf</name>
        <name>Delta-lactoferrin</name>
        <sequence type="described" ref="VSP_044308"/>
    </isoform>
</comment>
<comment type="tissue specificity">
    <text evidence="3 44 53">High levels are found in saliva and tears, intermediate levels in serum and plasma, and low levels in urine. In kidney, detected in the distal collecting tubules in the medulla but not in the cortical region or in blood vessels. Detected in peripheral blood neutrophils (at protein level). Isoform 1 and isoform DeltaLf are expressed in breast, prostate, spleen, pancreas, kidney, small intestine, lung, skeletal muscle, uterus, thymus and fetal liver. Isoform 1 is expressed in brain, testis and peripheral blood leukocytes; isoform DeltaLf is barely detectable in these tissues. Isoform DeltaLf is expressed in placenta, liver and ovary; isoform 1 is barely detectable in these tissues. In kidney, isoform 1 is expressed at high levels in the collecting tubules of the medulla but at very low levels in the cortex.</text>
</comment>
<comment type="PTM">
    <molecule>Isoform DeltaLf</molecule>
    <text evidence="36">Phosphorylation at Ser-10 activates the transcriptional activity (PubMed:20404350). Phosphorylation at Ser-10 also promotes proteasomal degradation (PubMed:20404350). Alternatively can undergo O-GlcNAcylation at Ser-10 (PubMed:20404350).</text>
</comment>
<comment type="PTM">
    <molecule>Isoform DeltaLf</molecule>
    <text evidence="36">O-GlcNAcylation at Ser-10 inhibits DNA binding and negatively regulates the transcriptional activity (PubMed:20404350). Alternatively can undergo phosphorylation at Ser-10 (PubMed:20404350).</text>
</comment>
<comment type="PTM">
    <text>Poly-N-acetyllactosaminic carbohydrate moiety seems to be needed for TLR4 activation.</text>
</comment>
<comment type="mass spectrometry" mass="5737.8" method="Electrospray" evidence="25">
    <molecule>Lactoferricin-H</molecule>
</comment>
<comment type="polymorphism">
    <text>The sequence shown corresponds to the reference genome sequence and is likely to represent the minor allele, whereas most publications refer to the longer sequence containing variant Arg-22 ins. Insertion of the additional arginine in variant Arg-22 ins creates an N-terminal basic cluster of four arginines, all of which appear to be important for the full functionality of the protein, including bactericidal and antifungal activities as well as binding to glycosaminoglycans, pspA, LPS, lysozyme and DNA.</text>
</comment>
<comment type="miscellaneous">
    <molecule>Isoform DeltaLf</molecule>
    <text evidence="68">Contains a phosphoserine at position 10 (alternate). Contains a O-linked (GlcNAc) serine at position 10 (alternate). O-GlcNAcylation at Ser-10 inhibits DNA binding and negatively regulates DeltaLf transcriptional activity, whereas phosphorylation activates it. Phosphorylation at Ser-10 also promotes proteasomal degradation.</text>
</comment>
<comment type="similarity">
    <text evidence="1">Belongs to the transferrin family.</text>
</comment>
<comment type="online information" name="Wikipedia">
    <link uri="https://en.wikipedia.org/wiki/Lactotransferrin"/>
    <text>Lactotransferrin entry</text>
</comment>
<keyword id="KW-0002">3D-structure</keyword>
<keyword id="KW-0877">Alternative promoter usage</keyword>
<keyword id="KW-0044">Antibiotic</keyword>
<keyword id="KW-0929">Antimicrobial</keyword>
<keyword id="KW-0963">Cytoplasm</keyword>
<keyword id="KW-0903">Direct protein sequencing</keyword>
<keyword id="KW-1015">Disulfide bond</keyword>
<keyword id="KW-0238">DNA-binding</keyword>
<keyword id="KW-0325">Glycoprotein</keyword>
<keyword id="KW-0358">Heparin-binding</keyword>
<keyword id="KW-0378">Hydrolase</keyword>
<keyword id="KW-0391">Immunity</keyword>
<keyword id="KW-0406">Ion transport</keyword>
<keyword id="KW-0408">Iron</keyword>
<keyword id="KW-0410">Iron transport</keyword>
<keyword id="KW-1017">Isopeptide bond</keyword>
<keyword id="KW-0479">Metal-binding</keyword>
<keyword id="KW-0539">Nucleus</keyword>
<keyword id="KW-0892">Osteogenesis</keyword>
<keyword id="KW-0645">Protease</keyword>
<keyword id="KW-1267">Proteomics identification</keyword>
<keyword id="KW-1185">Reference proteome</keyword>
<keyword id="KW-0677">Repeat</keyword>
<keyword id="KW-0964">Secreted</keyword>
<keyword id="KW-0720">Serine protease</keyword>
<keyword id="KW-0732">Signal</keyword>
<keyword id="KW-0804">Transcription</keyword>
<keyword id="KW-0805">Transcription regulation</keyword>
<keyword id="KW-0813">Transport</keyword>
<keyword id="KW-0832">Ubl conjugation</keyword>
<reference key="1">
    <citation type="journal article" date="1990" name="Nucleic Acids Res.">
        <title>Complete nucleotide sequence of human mammary gland lactoferrin.</title>
        <authorList>
            <person name="Rey M.W."/>
            <person name="Woloshuk S.L."/>
            <person name="de Boer H.A."/>
            <person name="Pieper F.R."/>
        </authorList>
    </citation>
    <scope>NUCLEOTIDE SEQUENCE [MRNA] (ISOFORM 1)</scope>
    <scope>VARIANTS ARG-22 INS; THR-148 AND CYS-422</scope>
    <source>
        <tissue>Mammary gland</tissue>
    </source>
</reference>
<reference key="2">
    <citation type="thesis" date="1994" institute="Genetic Engineering Research Institute" country="South Korea">
        <title>Cloning of human lactoferrin gene and its polymorphism in normal and cancer cells.</title>
        <authorList>
            <person name="Cho Y.Y."/>
        </authorList>
    </citation>
    <scope>NUCLEOTIDE SEQUENCE [MRNA] (ISOFORM 1)</scope>
    <scope>VARIANT ARG-22 INS</scope>
    <source>
        <tissue>Mammary gland</tissue>
    </source>
</reference>
<reference key="3">
    <citation type="journal article" date="1997" name="Proc. Natl. Acad. Sci. U.S.A.">
        <title>Identification of an alternative form of human lactoferrin mRNA that is expressed differentially in normal tissues and tumor-derived cell lines.</title>
        <authorList>
            <person name="Siebert P.D."/>
            <person name="Huang B.C."/>
        </authorList>
    </citation>
    <scope>NUCLEOTIDE SEQUENCE [MRNA] (ISOFORMS 1 AND DELTALF)</scope>
    <scope>ALTERNATIVE SPLICING</scope>
    <scope>TISSUE SPECIFICITY</scope>
    <source>
        <tissue>Lung</tissue>
    </source>
</reference>
<reference key="4">
    <citation type="journal article" date="2001" name="Sheng Wu Gong Cheng Xue Bao">
        <title>cDNA cloning and sequence analysis of human lactoferrin.</title>
        <authorList>
            <person name="Cheng H."/>
            <person name="Chen X.Z."/>
            <person name="Huan L.D."/>
        </authorList>
    </citation>
    <scope>NUCLEOTIDE SEQUENCE [MRNA] (ISOFORM 1)</scope>
    <scope>VARIANTS ARG-22 INS; THR-29; ARG-47 AND ASP-579</scope>
    <source>
        <tissue>Mammary gland</tissue>
    </source>
</reference>
<reference key="5">
    <citation type="journal article" date="2003" name="Indian J. Biochem. Biophys.">
        <title>Crystal structure of human seminal diferric lactoferrin at 3.4 Angstrom resolution.</title>
        <authorList>
            <person name="Kumar J."/>
            <person name="Weber W."/>
            <person name="Munchau S."/>
            <person name="Yadav S."/>
            <person name="Singh S.B."/>
            <person name="Saravanan K."/>
            <person name="Paramasivam M."/>
            <person name="Sharma S."/>
            <person name="Kaur P."/>
            <person name="Bhushan A."/>
            <person name="Srinivasan A."/>
            <person name="Betzel C."/>
            <person name="Singh T.P."/>
        </authorList>
    </citation>
    <scope>NUCLEOTIDE SEQUENCE [MRNA] (ISOFORM 1)</scope>
    <scope>X-RAY CRYSTALLOGRAPHY (3.40 ANGSTROMS) OF 22-710 IN COMPLEX WITH IRON AND CARBONATE</scope>
    <scope>FUNCTION</scope>
    <scope>VARIANTS ARG-22 INS; THR-29; ARG-47 AND ASP-579</scope>
    <source>
        <tissue>Seminal vesicle</tissue>
    </source>
</reference>
<reference key="6">
    <citation type="journal article" date="2003" name="Infect. Immun.">
        <title>One of two human lactoferrin variants exhibits increased antibacterial and transcriptional activation activities and is associated with localized juvenile periodontitis.</title>
        <authorList>
            <person name="Velliyagounder K."/>
            <person name="Kaplan J.B."/>
            <person name="Furgang D."/>
            <person name="Legarda D."/>
            <person name="Diamond G."/>
            <person name="Parkin R.E."/>
            <person name="Fine D.H."/>
        </authorList>
    </citation>
    <scope>NUCLEOTIDE SEQUENCE [MRNA] (ISOFORM 1)</scope>
    <scope>PROTEIN SEQUENCE OF 20-30</scope>
    <scope>FUNCTION</scope>
    <scope>VARIANTS ARG-22 INS; THR-29 AND ARG-47</scope>
    <source>
        <tissue>Blood</tissue>
    </source>
</reference>
<reference key="7">
    <citation type="submission" date="1992-02" db="EMBL/GenBank/DDBJ databases">
        <title>Human neutrophil lactoferrin coding and 5' flanking region DNA sequences.</title>
        <authorList>
            <person name="Wei X."/>
            <person name="Han J."/>
            <person name="Rado T.A."/>
        </authorList>
    </citation>
    <scope>NUCLEOTIDE SEQUENCE [GENOMIC DNA]</scope>
    <source>
        <tissue>Bone marrow</tissue>
    </source>
</reference>
<reference key="8">
    <citation type="submission" date="1992-05" db="EMBL/GenBank/DDBJ databases">
        <authorList>
            <person name="Conneely O.M."/>
        </authorList>
    </citation>
    <scope>NUCLEOTIDE SEQUENCE [MRNA] (ISOFORM 1)</scope>
    <scope>VARIANTS ARG-22 INS; THR-29 AND ARG-47</scope>
    <source>
        <tissue>Prostate</tissue>
    </source>
</reference>
<reference key="9">
    <citation type="submission" date="2002-10" db="EMBL/GenBank/DDBJ databases">
        <authorList>
            <person name="Shi Y.-Q."/>
            <person name="Zhang Y."/>
            <person name="Zheng Y.-M."/>
        </authorList>
    </citation>
    <scope>NUCLEOTIDE SEQUENCE [MRNA] (ISOFORM 1)</scope>
    <scope>VARIANTS ARG-22 INS; THR-29; ARG-47 AND ASP-579</scope>
    <source>
        <tissue>Mammary gland</tissue>
    </source>
</reference>
<reference key="10">
    <citation type="submission" date="2003-12" db="EMBL/GenBank/DDBJ databases">
        <title>Identification of a growth inhibition gene.</title>
        <authorList>
            <person name="Kim J.W."/>
        </authorList>
    </citation>
    <scope>NUCLEOTIDE SEQUENCE [MRNA] (ISOFORM 1)</scope>
    <scope>VARIANTS ARG-22 INS AND CYS-422</scope>
</reference>
<reference key="11">
    <citation type="submission" date="2008-04" db="EMBL/GenBank/DDBJ databases">
        <title>Mutations in ELA2 and LTF genes.</title>
        <authorList>
            <person name="Allayous C."/>
            <person name="Marianne-Pepin T."/>
        </authorList>
    </citation>
    <scope>NUCLEOTIDE SEQUENCE [GENOMIC DNA]</scope>
    <scope>VARIANTS ARG-22 INS; THR-29 AND ARG-47</scope>
</reference>
<reference key="12">
    <citation type="journal article" date="2004" name="Nat. Genet.">
        <title>Complete sequencing and characterization of 21,243 full-length human cDNAs.</title>
        <authorList>
            <person name="Ota T."/>
            <person name="Suzuki Y."/>
            <person name="Nishikawa T."/>
            <person name="Otsuki T."/>
            <person name="Sugiyama T."/>
            <person name="Irie R."/>
            <person name="Wakamatsu A."/>
            <person name="Hayashi K."/>
            <person name="Sato H."/>
            <person name="Nagai K."/>
            <person name="Kimura K."/>
            <person name="Makita H."/>
            <person name="Sekine M."/>
            <person name="Obayashi M."/>
            <person name="Nishi T."/>
            <person name="Shibahara T."/>
            <person name="Tanaka T."/>
            <person name="Ishii S."/>
            <person name="Yamamoto J."/>
            <person name="Saito K."/>
            <person name="Kawai Y."/>
            <person name="Isono Y."/>
            <person name="Nakamura Y."/>
            <person name="Nagahari K."/>
            <person name="Murakami K."/>
            <person name="Yasuda T."/>
            <person name="Iwayanagi T."/>
            <person name="Wagatsuma M."/>
            <person name="Shiratori A."/>
            <person name="Sudo H."/>
            <person name="Hosoiri T."/>
            <person name="Kaku Y."/>
            <person name="Kodaira H."/>
            <person name="Kondo H."/>
            <person name="Sugawara M."/>
            <person name="Takahashi M."/>
            <person name="Kanda K."/>
            <person name="Yokoi T."/>
            <person name="Furuya T."/>
            <person name="Kikkawa E."/>
            <person name="Omura Y."/>
            <person name="Abe K."/>
            <person name="Kamihara K."/>
            <person name="Katsuta N."/>
            <person name="Sato K."/>
            <person name="Tanikawa M."/>
            <person name="Yamazaki M."/>
            <person name="Ninomiya K."/>
            <person name="Ishibashi T."/>
            <person name="Yamashita H."/>
            <person name="Murakawa K."/>
            <person name="Fujimori K."/>
            <person name="Tanai H."/>
            <person name="Kimata M."/>
            <person name="Watanabe M."/>
            <person name="Hiraoka S."/>
            <person name="Chiba Y."/>
            <person name="Ishida S."/>
            <person name="Ono Y."/>
            <person name="Takiguchi S."/>
            <person name="Watanabe S."/>
            <person name="Yosida M."/>
            <person name="Hotuta T."/>
            <person name="Kusano J."/>
            <person name="Kanehori K."/>
            <person name="Takahashi-Fujii A."/>
            <person name="Hara H."/>
            <person name="Tanase T.-O."/>
            <person name="Nomura Y."/>
            <person name="Togiya S."/>
            <person name="Komai F."/>
            <person name="Hara R."/>
            <person name="Takeuchi K."/>
            <person name="Arita M."/>
            <person name="Imose N."/>
            <person name="Musashino K."/>
            <person name="Yuuki H."/>
            <person name="Oshima A."/>
            <person name="Sasaki N."/>
            <person name="Aotsuka S."/>
            <person name="Yoshikawa Y."/>
            <person name="Matsunawa H."/>
            <person name="Ichihara T."/>
            <person name="Shiohata N."/>
            <person name="Sano S."/>
            <person name="Moriya S."/>
            <person name="Momiyama H."/>
            <person name="Satoh N."/>
            <person name="Takami S."/>
            <person name="Terashima Y."/>
            <person name="Suzuki O."/>
            <person name="Nakagawa S."/>
            <person name="Senoh A."/>
            <person name="Mizoguchi H."/>
            <person name="Goto Y."/>
            <person name="Shimizu F."/>
            <person name="Wakebe H."/>
            <person name="Hishigaki H."/>
            <person name="Watanabe T."/>
            <person name="Sugiyama A."/>
            <person name="Takemoto M."/>
            <person name="Kawakami B."/>
            <person name="Yamazaki M."/>
            <person name="Watanabe K."/>
            <person name="Kumagai A."/>
            <person name="Itakura S."/>
            <person name="Fukuzumi Y."/>
            <person name="Fujimori Y."/>
            <person name="Komiyama M."/>
            <person name="Tashiro H."/>
            <person name="Tanigami A."/>
            <person name="Fujiwara T."/>
            <person name="Ono T."/>
            <person name="Yamada K."/>
            <person name="Fujii Y."/>
            <person name="Ozaki K."/>
            <person name="Hirao M."/>
            <person name="Ohmori Y."/>
            <person name="Kawabata A."/>
            <person name="Hikiji T."/>
            <person name="Kobatake N."/>
            <person name="Inagaki H."/>
            <person name="Ikema Y."/>
            <person name="Okamoto S."/>
            <person name="Okitani R."/>
            <person name="Kawakami T."/>
            <person name="Noguchi S."/>
            <person name="Itoh T."/>
            <person name="Shigeta K."/>
            <person name="Senba T."/>
            <person name="Matsumura K."/>
            <person name="Nakajima Y."/>
            <person name="Mizuno T."/>
            <person name="Morinaga M."/>
            <person name="Sasaki M."/>
            <person name="Togashi T."/>
            <person name="Oyama M."/>
            <person name="Hata H."/>
            <person name="Watanabe M."/>
            <person name="Komatsu T."/>
            <person name="Mizushima-Sugano J."/>
            <person name="Satoh T."/>
            <person name="Shirai Y."/>
            <person name="Takahashi Y."/>
            <person name="Nakagawa K."/>
            <person name="Okumura K."/>
            <person name="Nagase T."/>
            <person name="Nomura N."/>
            <person name="Kikuchi H."/>
            <person name="Masuho Y."/>
            <person name="Yamashita R."/>
            <person name="Nakai K."/>
            <person name="Yada T."/>
            <person name="Nakamura Y."/>
            <person name="Ohara O."/>
            <person name="Isogai T."/>
            <person name="Sugano S."/>
        </authorList>
    </citation>
    <scope>NUCLEOTIDE SEQUENCE [LARGE SCALE MRNA] (ISOFORMS 1 AND DELTALF)</scope>
    <scope>VARIANT ARG-22 INS</scope>
    <source>
        <tissue>Lung</tissue>
        <tissue>Trachea</tissue>
    </source>
</reference>
<reference key="13">
    <citation type="journal article" date="2006" name="Nature">
        <title>The DNA sequence, annotation and analysis of human chromosome 3.</title>
        <authorList>
            <person name="Muzny D.M."/>
            <person name="Scherer S.E."/>
            <person name="Kaul R."/>
            <person name="Wang J."/>
            <person name="Yu J."/>
            <person name="Sudbrak R."/>
            <person name="Buhay C.J."/>
            <person name="Chen R."/>
            <person name="Cree A."/>
            <person name="Ding Y."/>
            <person name="Dugan-Rocha S."/>
            <person name="Gill R."/>
            <person name="Gunaratne P."/>
            <person name="Harris R.A."/>
            <person name="Hawes A.C."/>
            <person name="Hernandez J."/>
            <person name="Hodgson A.V."/>
            <person name="Hume J."/>
            <person name="Jackson A."/>
            <person name="Khan Z.M."/>
            <person name="Kovar-Smith C."/>
            <person name="Lewis L.R."/>
            <person name="Lozado R.J."/>
            <person name="Metzker M.L."/>
            <person name="Milosavljevic A."/>
            <person name="Miner G.R."/>
            <person name="Morgan M.B."/>
            <person name="Nazareth L.V."/>
            <person name="Scott G."/>
            <person name="Sodergren E."/>
            <person name="Song X.-Z."/>
            <person name="Steffen D."/>
            <person name="Wei S."/>
            <person name="Wheeler D.A."/>
            <person name="Wright M.W."/>
            <person name="Worley K.C."/>
            <person name="Yuan Y."/>
            <person name="Zhang Z."/>
            <person name="Adams C.Q."/>
            <person name="Ansari-Lari M.A."/>
            <person name="Ayele M."/>
            <person name="Brown M.J."/>
            <person name="Chen G."/>
            <person name="Chen Z."/>
            <person name="Clendenning J."/>
            <person name="Clerc-Blankenburg K.P."/>
            <person name="Chen R."/>
            <person name="Chen Z."/>
            <person name="Davis C."/>
            <person name="Delgado O."/>
            <person name="Dinh H.H."/>
            <person name="Dong W."/>
            <person name="Draper H."/>
            <person name="Ernst S."/>
            <person name="Fu G."/>
            <person name="Gonzalez-Garay M.L."/>
            <person name="Garcia D.K."/>
            <person name="Gillett W."/>
            <person name="Gu J."/>
            <person name="Hao B."/>
            <person name="Haugen E."/>
            <person name="Havlak P."/>
            <person name="He X."/>
            <person name="Hennig S."/>
            <person name="Hu S."/>
            <person name="Huang W."/>
            <person name="Jackson L.R."/>
            <person name="Jacob L.S."/>
            <person name="Kelly S.H."/>
            <person name="Kube M."/>
            <person name="Levy R."/>
            <person name="Li Z."/>
            <person name="Liu B."/>
            <person name="Liu J."/>
            <person name="Liu W."/>
            <person name="Lu J."/>
            <person name="Maheshwari M."/>
            <person name="Nguyen B.-V."/>
            <person name="Okwuonu G.O."/>
            <person name="Palmeiri A."/>
            <person name="Pasternak S."/>
            <person name="Perez L.M."/>
            <person name="Phelps K.A."/>
            <person name="Plopper F.J."/>
            <person name="Qiang B."/>
            <person name="Raymond C."/>
            <person name="Rodriguez R."/>
            <person name="Saenphimmachak C."/>
            <person name="Santibanez J."/>
            <person name="Shen H."/>
            <person name="Shen Y."/>
            <person name="Subramanian S."/>
            <person name="Tabor P.E."/>
            <person name="Verduzco D."/>
            <person name="Waldron L."/>
            <person name="Wang J."/>
            <person name="Wang J."/>
            <person name="Wang Q."/>
            <person name="Williams G.A."/>
            <person name="Wong G.K.-S."/>
            <person name="Yao Z."/>
            <person name="Zhang J."/>
            <person name="Zhang X."/>
            <person name="Zhao G."/>
            <person name="Zhou J."/>
            <person name="Zhou Y."/>
            <person name="Nelson D."/>
            <person name="Lehrach H."/>
            <person name="Reinhardt R."/>
            <person name="Naylor S.L."/>
            <person name="Yang H."/>
            <person name="Olson M."/>
            <person name="Weinstock G."/>
            <person name="Gibbs R.A."/>
        </authorList>
    </citation>
    <scope>NUCLEOTIDE SEQUENCE [LARGE SCALE GENOMIC DNA]</scope>
</reference>
<reference key="14">
    <citation type="journal article" date="2004" name="Genome Res.">
        <title>The status, quality, and expansion of the NIH full-length cDNA project: the Mammalian Gene Collection (MGC).</title>
        <authorList>
            <consortium name="The MGC Project Team"/>
        </authorList>
    </citation>
    <scope>NUCLEOTIDE SEQUENCE [LARGE SCALE MRNA] (ISOFORM 1)</scope>
    <scope>VARIANT ARG-22 INS</scope>
    <source>
        <tissue>Prostate</tissue>
    </source>
</reference>
<reference key="15">
    <citation type="journal article" date="1992" name="Mol. Endocrinol.">
        <title>Differential molecular mechanism of the estrogen action that regulates lactoferrin gene in human and mouse.</title>
        <authorList>
            <person name="Teng C.T."/>
            <person name="Liu Y."/>
            <person name="Yang N."/>
            <person name="Walmer D."/>
            <person name="Panella T."/>
        </authorList>
    </citation>
    <scope>NUCLEOTIDE SEQUENCE [GENOMIC DNA] OF 1-15</scope>
</reference>
<reference key="16">
    <citation type="journal article" date="1990" name="Nucleic Acids Res.">
        <title>Nucleotide sequence of human lactoferrin cDNA.</title>
        <authorList>
            <person name="Powell M.J."/>
            <person name="Ogden J.E."/>
        </authorList>
    </citation>
    <scope>NUCLEOTIDE SEQUENCE [MRNA] OF 3-710 (ISOFORM 1)</scope>
    <scope>VARIANT ARG-22 INS</scope>
    <source>
        <tissue>Mammary gland</tissue>
    </source>
</reference>
<reference key="17">
    <citation type="submission" date="1991-12" db="EMBL/GenBank/DDBJ databases">
        <title>Molecular cloning and sequence analysis of human lactoferrin.</title>
        <authorList>
            <person name="Liang Q."/>
            <person name="Jimenez-Flores R."/>
            <person name="Richardson T."/>
        </authorList>
    </citation>
    <scope>NUCLEOTIDE SEQUENCE [MRNA] OF 6-710 (ISOFORM 1)</scope>
    <scope>VARIANT ARG-22 INS</scope>
    <source>
        <tissue>Mammary gland</tissue>
    </source>
</reference>
<reference key="18">
    <citation type="journal article" date="1984" name="Eur. J. Biochem.">
        <title>Human lactotransferrin: amino acid sequence and structural comparisons with other transferrins.</title>
        <authorList>
            <person name="Metz-Boutigue M.-H."/>
            <person name="Jolles J."/>
            <person name="Mazurier J."/>
            <person name="Schoentgen F."/>
            <person name="Legrand D."/>
            <person name="Spik G."/>
            <person name="Montreuil J."/>
            <person name="Jolles P."/>
        </authorList>
    </citation>
    <scope>PROTEIN SEQUENCE OF 20-710 (ISOFORM 1)</scope>
    <scope>DISULFIDE BONDS</scope>
</reference>
<reference key="19">
    <citation type="journal article" date="1981" name="Biochim. Biophys. Acta">
        <title>The present state of the human lactotransferrin sequence. Study and alignment of the cyanogen bromide fragments and characterization of N- and C-terminal domains.</title>
        <authorList>
            <person name="Metz-Boutigue M.-H."/>
            <person name="Mazurier J."/>
            <person name="Jolles J."/>
            <person name="Spik G."/>
            <person name="Montreuil J."/>
            <person name="Jolles P."/>
        </authorList>
    </citation>
    <scope>PRELIMINARY PROTEIN SEQUENCE OF 20-72; 133-170; 256-277; 359-528 AND 608-663 (ISOFORM 1)</scope>
</reference>
<reference key="20">
    <citation type="journal article" date="1992" name="Biochim. Biophys. Acta">
        <title>Identification of the bactericidal domain of lactoferrin.</title>
        <authorList>
            <person name="Bellamy W."/>
            <person name="Takase M."/>
            <person name="Yamauchi K."/>
            <person name="Wakabayashi H."/>
            <person name="Kawase K."/>
            <person name="Tomita M."/>
        </authorList>
    </citation>
    <scope>PROTEIN SEQUENCE OF 20-65 (ISOFORM 1)</scope>
    <scope>IDENTIFICATION OF LACTOFERRICIN PEPTIDE</scope>
    <scope>FUNCTION</scope>
    <scope>SYNTHESIS OF 36-58</scope>
    <source>
        <tissue>Milk</tissue>
    </source>
</reference>
<reference key="21">
    <citation type="journal article" date="1994" name="J. Biol. Chem.">
        <title>Delineation of the glycosaminoglycan-binding site in the human inflammatory response protein lactoferrin.</title>
        <authorList>
            <person name="Mann D.M."/>
            <person name="Romm E."/>
            <person name="Migliorini M."/>
        </authorList>
    </citation>
    <scope>PROTEIN SEQUENCE OF 20-40 (ISOFORM 1)</scope>
    <scope>FUNCTION</scope>
    <scope>GLYCOSAMINOGLYCAN BINDING</scope>
    <scope>SYNTHESIS OF 20-51; 20-45 AND 25-51</scope>
    <source>
        <tissue>Milk</tissue>
    </source>
</reference>
<reference key="22">
    <citation type="journal article" date="1995" name="Nihon Hoigaku Zasshi">
        <title>Characterization of the 84-kDa protein with ABH activity in human seminal plasma.</title>
        <authorList>
            <person name="Sato I."/>
        </authorList>
    </citation>
    <scope>PROTEIN SEQUENCE OF 20-56 (ISOFORM 1)</scope>
    <source>
        <tissue>Seminal plasma</tissue>
    </source>
</reference>
<reference key="23">
    <citation type="journal article" date="2005" name="Antimicrob. Agents Chemother.">
        <title>Human lactoferricin is partially folded in aqueous solution and is better stabilized in a membrane mimetic solvent.</title>
        <authorList>
            <person name="Hunter H.N."/>
            <person name="Demcoe A.R."/>
            <person name="Jenssen H."/>
            <person name="Gutteberg T.J."/>
            <person name="Vogel H.J."/>
        </authorList>
    </citation>
    <scope>PROTEIN SEQUENCE OF 24-32; 38-43; 50-57 AND 59-67 (ISOFORM 1)</scope>
    <scope>STRUCTURE BY NMR OF 20-67 (LACTOFERRICIN)</scope>
    <scope>MASS SPECTROMETRY</scope>
    <scope>DISULFIDE BONDS</scope>
    <source>
        <tissue>Milk</tissue>
    </source>
</reference>
<reference key="24">
    <citation type="journal article" date="2015" name="J. Proteome Res.">
        <title>Human basal tear peptidome characterization by CID, HCD, and ETD followed by in silico and in vitro analyses for antimicrobial peptide identification.</title>
        <authorList>
            <person name="Azkargorta M."/>
            <person name="Soria J."/>
            <person name="Ojeda C."/>
            <person name="Guzman F."/>
            <person name="Acera A."/>
            <person name="Iloro I."/>
            <person name="Suarez T."/>
            <person name="Elortza F."/>
        </authorList>
    </citation>
    <scope>PROTEIN SEQUENCE OF 38-57; 235-261; 509-525 AND 651-710</scope>
    <scope>IDENTIFICATION BY MASS SPECTROMETRY</scope>
    <source>
        <tissue>Tear</tissue>
    </source>
</reference>
<reference key="25">
    <citation type="submission" date="1997-03" db="EMBL/GenBank/DDBJ databases">
        <authorList>
            <person name="McCombie W.R."/>
            <person name="Wilson R."/>
            <person name="Chen E."/>
            <person name="Gibbs R."/>
            <person name="Zuo L."/>
            <person name="Johnson D."/>
            <person name="Nhan M."/>
            <person name="Parnell L."/>
            <person name="Dedhia N."/>
            <person name="Ansari A."/>
            <person name="Mardis E."/>
            <person name="Schutz K."/>
            <person name="Gnoj L."/>
            <person name="la Bastide M."/>
            <person name="Kaplan N."/>
            <person name="Greco T."/>
            <person name="Touchman J."/>
            <person name="Muzny D."/>
            <person name="Chen C.N."/>
            <person name="Evans C."/>
            <person name="Fitzgerald M."/>
            <person name="See L.H."/>
            <person name="Tang M."/>
            <person name="Porcel B.M."/>
            <person name="Dragan Y."/>
            <person name="Giacalone J."/>
            <person name="Pae A."/>
            <person name="Powell E."/>
            <person name="Solinsky K.A."/>
            <person name="Desilva U."/>
            <person name="Diaz-Perez S."/>
            <person name="Zhou X."/>
            <person name="Yu Y."/>
            <person name="Watanabe M."/>
            <person name="Doggett N."/>
            <person name="Garcia D."/>
            <person name="Sagripanti J.L."/>
        </authorList>
    </citation>
    <scope>NUCLEOTIDE SEQUENCE [GENOMIC DNA] OF 236-710</scope>
    <scope>VARIANT ASP-579</scope>
</reference>
<reference key="26">
    <citation type="journal article" date="1987" name="Blood">
        <title>Isolation of lactoferrin cDNA from a human myeloid library and expression of mRNA during normal and leukemic myelopoiesis.</title>
        <authorList>
            <person name="Rado T.A."/>
            <person name="Wei X."/>
            <person name="Benz E.J. Jr."/>
        </authorList>
    </citation>
    <scope>NUCLEOTIDE SEQUENCE [MRNA] OF 435-710</scope>
    <source>
        <tissue>Myeloid</tissue>
    </source>
</reference>
<reference key="27">
    <citation type="journal article" date="1982" name="FEBS Lett.">
        <title>An 88 amino acid long C-terminal sequence of human lactotransferrin.</title>
        <authorList>
            <person name="Metz-Boutigue M.-H."/>
            <person name="Jolles J."/>
            <person name="Mazurier J."/>
            <person name="Spik G."/>
            <person name="Montreuil J."/>
            <person name="Jolles P."/>
        </authorList>
    </citation>
    <scope>PROTEIN SEQUENCE OF 608-710</scope>
</reference>
<reference key="28">
    <citation type="journal article" date="1982" name="Infect. Immun.">
        <title>Bactericidal activity of human lactoferrin: differentiation from the stasis of iron deprivation.</title>
        <authorList>
            <person name="Arnold R.R."/>
            <person name="Russell J.E."/>
            <person name="Champion W.J."/>
            <person name="Brewer M."/>
            <person name="Gauthier J.J."/>
        </authorList>
    </citation>
    <scope>FUNCTION</scope>
</reference>
<reference key="29">
    <citation type="journal article" date="1985" name="Blood">
        <title>Ultrastructural localization of lactoferrin and myeloperoxidase in human neutrophils by immunogold.</title>
        <authorList>
            <person name="Cramer E."/>
            <person name="Pryzwansky K.B."/>
            <person name="Villeval J.L."/>
            <person name="Testa U."/>
            <person name="Breton-Gorius J."/>
        </authorList>
    </citation>
    <scope>SUBCELLULAR LOCATION</scope>
    <scope>TISSUE SPECIFICITY</scope>
</reference>
<reference key="30">
    <citation type="journal article" date="1988" name="Infect. Immun.">
        <title>Damage of the outer membrane of enteric gram-negative bacteria by lactoferrin and transferrin.</title>
        <authorList>
            <person name="Ellison R.T. III"/>
            <person name="Giehl T.J."/>
            <person name="LaForce F.M."/>
        </authorList>
    </citation>
    <scope>FUNCTION</scope>
</reference>
<reference key="31">
    <citation type="journal article" date="1990" name="Agric. Biol. Chem.">
        <title>Isolation and characterization of opioid antagonist peptides derived from human lactoferrin.</title>
        <authorList>
            <person name="Tani F."/>
            <person name="Iio K."/>
            <person name="Chiba H."/>
            <person name="Yoshikawa M."/>
        </authorList>
    </citation>
    <scope>CHARACTERIZATION OF LACTOFERROXINS</scope>
</reference>
<reference key="32">
    <citation type="journal article" date="1997" name="Biochem. J.">
        <title>N-terminal stretch Arg2, Arg3, Arg4 and Arg5 of human lactoferrin is essential for binding to heparin, bacterial lipopolysaccharide, human lysozyme and DNA.</title>
        <authorList>
            <person name="van Berkel P.H."/>
            <person name="Geerts M.E."/>
            <person name="van Veen H.A."/>
            <person name="Mericskay M."/>
            <person name="de Boer H.A."/>
            <person name="Nuijens J.H."/>
        </authorList>
    </citation>
    <scope>FUNCTION</scope>
    <scope>MUTAGENESIS OF 20-G--R-23</scope>
</reference>
<reference key="33">
    <citation type="journal article" date="2000" name="Antimicrob. Agents Chemother.">
        <title>Candidacidal activities of human lactoferrin peptides derived from the N terminus.</title>
        <authorList>
            <person name="Lupetti A."/>
            <person name="Paulusma-Annema A."/>
            <person name="Welling M.M."/>
            <person name="Senesi S."/>
            <person name="van Dissel J.T."/>
            <person name="Nibbering P.H."/>
        </authorList>
    </citation>
    <scope>FUNCTION</scope>
</reference>
<reference key="34">
    <citation type="journal article" date="2000" name="Kidney Int.">
        <title>Expression of lactoferrin in the kidney: implications for innate immunity and iron metabolism.</title>
        <authorList>
            <person name="Abrink M."/>
            <person name="Larsson E."/>
            <person name="Gobl A."/>
            <person name="Hellman L."/>
        </authorList>
    </citation>
    <scope>TISSUE SPECIFICITY</scope>
</reference>
<reference key="35">
    <citation type="journal article" date="2001" name="Infect. Immun.">
        <title>Human lactoferrin and peptides derived from its N terminus are highly effective against infections with antibiotic-resistant bacteria.</title>
        <authorList>
            <person name="Nibbering P.H."/>
            <person name="Ravensbergen E."/>
            <person name="Welling M.M."/>
            <person name="van Berkel L.A."/>
            <person name="van Berkel P.H."/>
            <person name="Pauwels E.K."/>
            <person name="Nuijens J.H."/>
        </authorList>
    </citation>
    <scope>FUNCTION</scope>
    <scope>SYNTHESIS OF 20-29 AND 39-49</scope>
    <scope>MUTAGENESIS OF 20-GLY--ARG-22</scope>
</reference>
<reference key="36">
    <citation type="journal article" date="2002" name="Nature">
        <title>A component of innate immunity prevents bacterial biofilm development.</title>
        <authorList>
            <person name="Singh P.K."/>
            <person name="Parsek M.R."/>
            <person name="Greenberg E.P."/>
            <person name="Welsh M.J."/>
        </authorList>
    </citation>
    <scope>FUNCTION</scope>
</reference>
<reference key="37">
    <citation type="journal article" date="2003" name="Biochem. Biophys. Res. Commun.">
        <title>An intronic alternative promoter of the human lactoferrin gene is activated by Ets.</title>
        <authorList>
            <person name="Liu D."/>
            <person name="Wang X."/>
            <person name="Zhang Z."/>
            <person name="Teng C.T."/>
        </authorList>
    </citation>
    <scope>SUBCELLULAR LOCATION</scope>
    <scope>ALTERNATIVE PROMOTER USAGE</scope>
</reference>
<reference key="38">
    <citation type="journal article" date="2003" name="Biochemistry (Mosc.)">
        <title>Potassium efflux induced by a new lactoferrin-derived peptide mimicking the effect of native human lactoferrin on the bacterial cytoplasmic membrane.</title>
        <authorList>
            <person name="Viejo-Diaz M."/>
            <person name="Andres M.T."/>
            <person name="Perez-Gil J."/>
            <person name="Sanchez M."/>
            <person name="Fierro J.F."/>
        </authorList>
    </citation>
    <scope>FUNCTION</scope>
    <scope>SYNTHESIS OF 36-58 AND 171-201 (KALIOCIN-1)</scope>
</reference>
<reference key="39">
    <citation type="journal article" date="2003" name="Mol. Microbiol.">
        <title>Human milk lactoferrin is a serine protease that cleaves Haemophilus surface proteins at arginine-rich sites.</title>
        <authorList>
            <person name="Hendrixson D.R."/>
            <person name="Qiu J."/>
            <person name="Shewry S.C."/>
            <person name="Fink D.L."/>
            <person name="Petty S."/>
            <person name="Baker E.N."/>
            <person name="Plaut A.G."/>
            <person name="St Geme J.W. III"/>
        </authorList>
    </citation>
    <scope>FUNCTION AS A PROTEASE</scope>
    <scope>CATALYTIC ACTIVITY</scope>
    <scope>ACTIVE SITE</scope>
    <scope>MUTAGENESIS OF LYS-92; PRO-270 AND SER-278</scope>
</reference>
<reference key="40">
    <citation type="journal article" date="2004" name="BioMetals">
        <title>Expression of delta-lactoferrin induces cell cycle arrest.</title>
        <authorList>
            <person name="Breton M."/>
            <person name="Mariller C."/>
            <person name="Benaissa M."/>
            <person name="Caillaux K."/>
            <person name="Browaeys E."/>
            <person name="Masson M."/>
            <person name="Vilain J.P."/>
            <person name="Mazurier J."/>
            <person name="Pierce A."/>
        </authorList>
    </citation>
    <scope>FUNCTION</scope>
    <scope>SUBCELLULAR LOCATION (DELTALF)</scope>
</reference>
<reference key="41">
    <citation type="journal article" date="2004" name="Endocrinology">
        <title>Lactoferrin is a potent regulator of bone cell activity and increases bone formation in vivo.</title>
        <authorList>
            <person name="Cornish J."/>
            <person name="Callon K.E."/>
            <person name="Naot D."/>
            <person name="Palmano K.P."/>
            <person name="Banovic T."/>
            <person name="Bava U."/>
            <person name="Watson M."/>
            <person name="Lin J.M."/>
            <person name="Tong P.C."/>
            <person name="Chen Q."/>
            <person name="Chan V.A."/>
            <person name="Reid H.E."/>
            <person name="Fazzalari N."/>
            <person name="Baker H.M."/>
            <person name="Baker E.N."/>
            <person name="Haggarty N.W."/>
            <person name="Grey A.B."/>
            <person name="Reid I.R."/>
        </authorList>
    </citation>
    <scope>FUNCTION</scope>
</reference>
<reference key="42">
    <citation type="journal article" date="2006" name="FEBS Lett.">
        <title>Human lactoferrin upregulates expression of KDR/Flk-1 and stimulates VEGF-A-mediated endothelial cell proliferation and migration.</title>
        <authorList>
            <person name="Kim C.W."/>
            <person name="Son K.N."/>
            <person name="Choi S.Y."/>
            <person name="Kim J."/>
        </authorList>
    </citation>
    <scope>FUNCTION</scope>
</reference>
<reference key="43">
    <citation type="journal article" date="2007" name="Antiviral Res.">
        <title>The anti-papillomavirus activity of human and bovine lactoferricin.</title>
        <authorList>
            <person name="Mistry N."/>
            <person name="Drobni P."/>
            <person name="Naslund J."/>
            <person name="Sunkari V.G."/>
            <person name="Jenssen H."/>
            <person name="Evander M."/>
        </authorList>
    </citation>
    <scope>FUNCTION</scope>
</reference>
<reference key="44">
    <citation type="journal article" date="2007" name="Biol. Reprod.">
        <title>Characterization of an eppin protein complex from human semen and spermatozoa.</title>
        <authorList>
            <person name="Wang Z."/>
            <person name="Widgren E.E."/>
            <person name="Richardson R.T."/>
            <person name="O'Rand M.G."/>
        </authorList>
    </citation>
    <scope>IDENTIFICATION IN A COMPLEX WITH CLU; SEMG1 AND EPPIN</scope>
</reference>
<reference key="45">
    <citation type="journal article" date="2007" name="J. Virol.">
        <title>Adenoviruses use lactoferrin as a bridge for CAR-independent binding to and infection of epithelial cells.</title>
        <authorList>
            <person name="Johansson C."/>
            <person name="Jonsson M."/>
            <person name="Marttila M."/>
            <person name="Persson D."/>
            <person name="Fan X.L."/>
            <person name="Skog J."/>
            <person name="Frangsmyr L."/>
            <person name="Wadell G."/>
            <person name="Arnberg N."/>
        </authorList>
    </citation>
    <scope>FUNCTION</scope>
</reference>
<reference key="46">
    <citation type="journal article" date="2008" name="Proteomics">
        <title>Identification of N-linked glycoproteins in human milk by hydrophilic interaction liquid chromatography and mass spectrometry.</title>
        <authorList>
            <person name="Picariello G."/>
            <person name="Ferranti P."/>
            <person name="Mamone G."/>
            <person name="Roepstorff P."/>
            <person name="Addeo F."/>
        </authorList>
    </citation>
    <scope>GLYCOSYLATION [LARGE SCALE ANALYSIS] AT ASN-156; ASN-497 AND ASN-642</scope>
    <source>
        <tissue>Milk</tissue>
    </source>
</reference>
<reference key="47">
    <citation type="journal article" date="2009" name="J. Clin. Invest.">
        <title>Apoptotic human cells inhibit migration of granulocytes via release of lactoferrin.</title>
        <authorList>
            <person name="Bournazou I."/>
            <person name="Pound J.D."/>
            <person name="Duffin R."/>
            <person name="Bournazos S."/>
            <person name="Melville L.A."/>
            <person name="Brown S.B."/>
            <person name="Rossi A.G."/>
            <person name="Gregory C.D."/>
        </authorList>
    </citation>
    <scope>FUNCTION</scope>
</reference>
<reference key="48">
    <citation type="journal article" date="2009" name="J. Proteome Res.">
        <title>Glycoproteomics analysis of human liver tissue by combination of multiple enzyme digestion and hydrazide chemistry.</title>
        <authorList>
            <person name="Chen R."/>
            <person name="Jiang X."/>
            <person name="Sun D."/>
            <person name="Han G."/>
            <person name="Wang F."/>
            <person name="Ye M."/>
            <person name="Wang L."/>
            <person name="Zou H."/>
        </authorList>
    </citation>
    <scope>GLYCOSYLATION [LARGE SCALE ANALYSIS] AT ASN-497</scope>
    <source>
        <tissue>Liver</tissue>
    </source>
</reference>
<reference key="49">
    <citation type="journal article" date="2010" name="FEBS J.">
        <title>Human lactoferrin activates NF-kappaB through the Toll-like receptor 4 pathway while it interferes with the lipopolysaccharide-stimulated TLR4 signaling.</title>
        <authorList>
            <person name="Ando K."/>
            <person name="Hasegawa K."/>
            <person name="Shindo K."/>
            <person name="Furusawa T."/>
            <person name="Fujino T."/>
            <person name="Kikugawa K."/>
            <person name="Nakano H."/>
            <person name="Takeuchi O."/>
            <person name="Akira S."/>
            <person name="Akiyama T."/>
            <person name="Gohda J."/>
            <person name="Inoue J."/>
            <person name="Hayakawa M."/>
        </authorList>
    </citation>
    <scope>FUNCTION</scope>
    <scope>PTM</scope>
</reference>
<reference key="50">
    <citation type="journal article" date="2010" name="J. Biol. Chem.">
        <title>O-GlcNAcylation/phosphorylation cycling at Ser10 controls both transcriptional activity and stability of delta-lactoferrin.</title>
        <authorList>
            <person name="Hardiville S."/>
            <person name="Hoedt E."/>
            <person name="Mariller C."/>
            <person name="Benaissa M."/>
            <person name="Pierce A."/>
        </authorList>
    </citation>
    <scope>GLYCOSYLATION AT SER-10 (ISOFORM DELTALF)</scope>
    <scope>PHOSPHORYLATION AT SER-10 (ISOFORM DELTALF)</scope>
    <scope>UBIQUITINATION AT LYS-379 AND LYS-391 (ISOFORM DELTALF)</scope>
</reference>
<reference key="51">
    <citation type="journal article" date="2011" name="BMC Syst. Biol.">
        <title>Initial characterization of the human central proteome.</title>
        <authorList>
            <person name="Burkard T.R."/>
            <person name="Planyavsky M."/>
            <person name="Kaupe I."/>
            <person name="Breitwieser F.P."/>
            <person name="Buerckstuemmer T."/>
            <person name="Bennett K.L."/>
            <person name="Superti-Furga G."/>
            <person name="Colinge J."/>
        </authorList>
    </citation>
    <scope>IDENTIFICATION BY MASS SPECTROMETRY [LARGE SCALE ANALYSIS]</scope>
</reference>
<reference key="52">
    <citation type="journal article" date="2012" name="Biochem. Cell Biol.">
        <title>Delta-lactoferrin, an intracellular lactoferrin isoform that acts as a transcription factor.</title>
        <authorList>
            <person name="Mariller C."/>
            <person name="Hardiville S."/>
            <person name="Hoedt E."/>
            <person name="Huvent I."/>
            <person name="Pina-Canseco S."/>
            <person name="Pierce A."/>
        </authorList>
    </citation>
    <scope>FUNCTION AS A TRANSCRIPTION FACTOR (ISOFORM DELTALF)</scope>
    <scope>DNA-BINDING (ISOFORM DELTALF)</scope>
</reference>
<reference key="53">
    <citation type="journal article" date="2013" name="PLoS ONE">
        <title>Ceruloplasmin: macromolecular assemblies with iron-containing acute phase proteins.</title>
        <authorList>
            <person name="Samygina V.R."/>
            <person name="Sokolov A.V."/>
            <person name="Bourenkov G."/>
            <person name="Petoukhov M.V."/>
            <person name="Pulina M.O."/>
            <person name="Zakharova E.T."/>
            <person name="Vasilyev V.B."/>
            <person name="Bartunik H."/>
            <person name="Svergun D.I."/>
        </authorList>
    </citation>
    <scope>INTERACTION WITH CP</scope>
</reference>
<reference key="54">
    <citation type="journal article" date="2014" name="J. Proteomics">
        <title>An enzyme assisted RP-RPLC approach for in-depth analysis of human liver phosphoproteome.</title>
        <authorList>
            <person name="Bian Y."/>
            <person name="Song C."/>
            <person name="Cheng K."/>
            <person name="Dong M."/>
            <person name="Wang F."/>
            <person name="Huang J."/>
            <person name="Sun D."/>
            <person name="Wang L."/>
            <person name="Ye M."/>
            <person name="Zou H."/>
        </authorList>
    </citation>
    <scope>IDENTIFICATION BY MASS SPECTROMETRY [LARGE SCALE ANALYSIS]</scope>
    <source>
        <tissue>Liver</tissue>
    </source>
</reference>
<reference key="55">
    <citation type="journal article" date="1989" name="J. Mol. Biol.">
        <title>Structure of human lactoferrin: crystallographic structure analysis and refinement at 2.8-A resolution.</title>
        <authorList>
            <person name="Anderson B.F."/>
            <person name="Baker H.M."/>
            <person name="Norris G.E."/>
            <person name="Rice D.W."/>
            <person name="Baker E.N."/>
        </authorList>
    </citation>
    <scope>X-RAY CRYSTALLOGRAPHY (2.8 ANGSTROMS)</scope>
    <scope>SEQUENCE REVISION</scope>
</reference>
<reference key="56">
    <citation type="journal article" date="1991" name="Acta Crystallogr. B">
        <title>Molecular replacement solution of the structure of apolactoferrin, a protein displaying large-scale conformational change.</title>
        <authorList>
            <person name="Norris G.E."/>
            <person name="Anderson B.F."/>
            <person name="Baker E.N."/>
        </authorList>
    </citation>
    <scope>X-RAY CRYSTALLOGRAPHY (2.80 ANGSTROMS) OF 20-710</scope>
</reference>
<reference key="57">
    <citation type="journal article" date="1992" name="Biochemistry">
        <title>Metal substitution in transferrins: the crystal structure of human copper-lactoferrin at 2.1-A resolution.</title>
        <authorList>
            <person name="Smith C.A."/>
            <person name="Anderson B.F."/>
            <person name="Baker H.M."/>
            <person name="Baker E.N."/>
        </authorList>
    </citation>
    <scope>X-RAY CRYSTALLOGRAPHY (2.10 ANGSTROMS) OF 20-710 IN COMPLEX WITH COPPER AND CARBONATE</scope>
    <scope>GLYCOSYLATION AT ASN-156 AND ASN-497</scope>
</reference>
<reference key="58">
    <citation type="journal article" date="1993" name="J. Mol. Biol.">
        <title>Structure of the recombinant N-terminal lobe of human lactoferrin at 2.0 A resolution.</title>
        <authorList>
            <person name="Day C.L."/>
            <person name="Anderson B.F."/>
            <person name="Tweedie J.W."/>
            <person name="Baker E.N."/>
        </authorList>
    </citation>
    <scope>X-RAY CRYSTALLOGRAPHY (2.00 ANGSTROMS) OF 21-352 IN COMPLEX WITH IRON AND CARBONATE</scope>
    <scope>DISULFIDE BONDS</scope>
</reference>
<reference key="59">
    <citation type="journal article" date="1994" name="Acta Crystallogr. D">
        <title>Structure of copper- and oxalate-substituted human lactoferrin at 2.0 A resolution.</title>
        <authorList>
            <person name="Smith C.A."/>
            <person name="Anderson B.F."/>
            <person name="Baker H.M."/>
            <person name="Baker E.N."/>
        </authorList>
    </citation>
    <scope>X-RAY CRYSTALLOGRAPHY (2.00 ANGSTROMS) OF 20-710 IN COMPLEX WITH COPPER AND OXALATE</scope>
    <scope>GLYCOSYLATION AT ASN-156</scope>
</reference>
<reference key="60">
    <citation type="journal article" date="1994" name="Structure">
        <title>Structures of a legume lectin complexed with the human lactotransferrin N2 fragment, and with an isolated biantennary glycopeptide: role of the fucose moiety.</title>
        <authorList>
            <person name="Bourne Y."/>
            <person name="Mazurier J."/>
            <person name="Legrand D."/>
            <person name="Rouge P."/>
            <person name="Montreuil J."/>
            <person name="Spik G."/>
            <person name="Cambillau C."/>
        </authorList>
    </citation>
    <scope>X-RAY CRYSTALLOGRAPHY (3.30 ANGSTROMS) OF 110-268</scope>
    <scope>GLYCOSYLATION AT ASN-156</scope>
</reference>
<reference key="61">
    <citation type="journal article" date="1995" name="Acta Crystallogr. D">
        <title>Structure of human diferric lactoferrin refined at 2.2-A resolution.</title>
        <authorList>
            <person name="Haridas M."/>
            <person name="Anderson B.F."/>
            <person name="Baker E.N."/>
        </authorList>
    </citation>
    <scope>X-RAY CRYSTALLOGRAPHY (2.2 ANGSTROMS) OF 20-710 IN COMPLEX WITH IRON AND CARBONATE</scope>
    <scope>GLYCOSYLATION AT ASN-156 AND ASN-497</scope>
</reference>
<reference key="62">
    <citation type="journal article" date="1996" name="Biochemistry">
        <title>Anion binding by transferrins: importance of second-shell effects revealed by the crystal structure of oxalate-substituted diferric lactoferrin.</title>
        <authorList>
            <person name="Baker H.M."/>
            <person name="Anderson B.F."/>
            <person name="Brodie A.M."/>
            <person name="Shongwe M.S."/>
            <person name="Smith C.A."/>
            <person name="Baker E.N."/>
        </authorList>
    </citation>
    <scope>X-RAY CRYSTALLOGRAPHY (2.40 ANGSTROMS) OF 20-710 IN COMPLEX WITH IRON AND OXALATE</scope>
</reference>
<reference key="63">
    <citation type="journal article" date="1996" name="Biochemistry">
        <title>Mutation of arginine 121 in lactoferrin destabilizes iron binding by disruption of anion binding: crystal structures of R121S and R121E mutants.</title>
        <authorList>
            <person name="Faber H.R."/>
            <person name="Baker C.J."/>
            <person name="Day C.L."/>
            <person name="Tweedie J.W."/>
            <person name="Baker E.N."/>
        </authorList>
    </citation>
    <scope>X-RAY CRYSTALLOGRAPHY (2.30 ANGSTROMS) OF 22-352 OF MUTANTS GLU-140 AND SER-140 IN COMPLEX WITH IRON AND CARBONATE</scope>
    <scope>MUTAGENESIS OF ARG-140</scope>
</reference>
<reference key="64">
    <citation type="journal article" date="1996" name="J. Mol. Biol.">
        <title>Altered domain closure and iron binding in transferrins: the crystal structure of the Asp60Ser mutant of the amino-terminal half-molecule of human lactoferrin.</title>
        <authorList>
            <person name="Faber H.R."/>
            <person name="Bland T."/>
            <person name="Day C.L."/>
            <person name="Norris G.E."/>
            <person name="Tweedie J.W."/>
            <person name="Baker E.N."/>
        </authorList>
    </citation>
    <scope>X-RAY CRYSTALLOGRAPHY (2.05 ANGSTROMS) OF 21-352 OF MUTANT SER-79 IN COMPLEX WITH IRON AND CARBONATE</scope>
    <scope>MUTAGENESIS OF ASP-79</scope>
</reference>
<reference key="65">
    <citation type="journal article" date="1997" name="Biochemistry">
        <title>Mutagenesis of the histidine ligand in human lactoferrin: iron binding properties and crystal structure of the histidine-253--&gt;methionine mutant.</title>
        <authorList>
            <person name="Nicholson H."/>
            <person name="Anderson B.F."/>
            <person name="Bland T."/>
            <person name="Shewry S.C."/>
            <person name="Tweedie J.W."/>
            <person name="Baker E.N."/>
        </authorList>
    </citation>
    <scope>X-RAY CRYSTALLOGRAPHY (2.2 ANGSTROMS) OF 21-353 OF MUTANT MET-272 IN COMPLEX WITH IRON AND CARBONATE</scope>
    <scope>MUTAGENESIS OF HIS-272</scope>
</reference>
<reference key="66">
    <citation type="journal article" date="1998" name="Acta Crystallogr. D">
        <title>Structure of human apolactoferrin at 2.0 A resolution. Refinement and analysis of ligand-induced conformational change.</title>
        <authorList>
            <person name="Jameson G.B."/>
            <person name="Anderson B.F."/>
            <person name="Norris G.E."/>
            <person name="Thomas D.H."/>
            <person name="Baker E.N."/>
        </authorList>
    </citation>
    <scope>X-RAY CRYSTALLOGRAPHY (2.00 ANGSTROMS) OF 20-710</scope>
</reference>
<reference key="67">
    <citation type="journal article" date="1999" name="Acta Crystallogr. D">
        <title>Structure of recombinant human lactoferrin expressed in Aspergillus awamori.</title>
        <authorList>
            <person name="Sun X.L."/>
            <person name="Baker H.M."/>
            <person name="Shewry S.C."/>
            <person name="Jameson G.B."/>
            <person name="Baker E.N."/>
        </authorList>
    </citation>
    <scope>X-RAY CRYSTALLOGRAPHY (2.2 ANGSTROMS) 20-710 IN COMPLEX WITH IRON AND CARBONATE</scope>
</reference>
<reference key="68">
    <citation type="journal article" date="2000" name="Biochemistry">
        <title>Crystal structure and iron-binding properties of the R210K mutant of the N-lobe of human lactoferrin: implications for iron release from transferrins.</title>
        <authorList>
            <person name="Peterson N.A."/>
            <person name="Anderson B.F."/>
            <person name="Jameson G.B."/>
            <person name="Tweedie J.W."/>
            <person name="Baker E.N."/>
        </authorList>
    </citation>
    <scope>X-RAY CRYSTALLOGRAPHY (2.00 ANGSTROMS) OF 21-348 OF MUTANT LYS-229 IN COMPLEX WITH IRON AND CARBONATE</scope>
    <scope>MUTAGENESIS OF ARG-229</scope>
</reference>
<reference key="69">
    <citation type="journal article" date="2000" name="J. Biol. Inorg. Chem.">
        <title>Metal substitution in transferrins: specific binding of cerium(IV) revealed by the crystal structure of cerium-substituted human lactoferrin.</title>
        <authorList>
            <person name="Baker H.M."/>
            <person name="Baker C.J."/>
            <person name="Smith C.A."/>
            <person name="Baker E.N."/>
        </authorList>
    </citation>
    <scope>X-RAY CRYSTALLOGRAPHY (2.20 ANGSTROMS) OF 21-710 IN COMPLEX WITH CERIUM AND CARBONATE</scope>
</reference>
<reference key="70">
    <citation type="journal article" date="2002" name="Acta Crystallogr. D">
        <title>Structure of a domain-opened mutant (R121D) of the human lactoferrin N-lobe refined from a merohedrally twinned crystal form.</title>
        <authorList>
            <person name="Jameson G.B."/>
            <person name="Anderson B.F."/>
            <person name="Breyer W.A."/>
            <person name="Day C.L."/>
            <person name="Tweedie J.W."/>
            <person name="Baker E.N."/>
        </authorList>
    </citation>
    <scope>X-RAY CRYSTALLOGRAPHY (3.00 ANGSTROMS) OF 21-351 OF MUTANT ASP-140</scope>
    <scope>MUTAGENESIS OF ARG-140</scope>
</reference>
<reference key="71">
    <citation type="journal article" date="2002" name="Biochemistry">
        <title>'Dilysine trigger' in transferrins probed by mutagenesis of lactoferrin: crystal structures of the R210G, R210E, and R210L mutants of human lactoferrin.</title>
        <authorList>
            <person name="Peterson N.A."/>
            <person name="Arcus V.L."/>
            <person name="Anderson B.F."/>
            <person name="Tweedie J.W."/>
            <person name="Jameson G.B."/>
            <person name="Baker E.N."/>
        </authorList>
    </citation>
    <scope>X-RAY CRYSTALLOGRAPHY (1.95 ANGSTROMS) OF 21-352 OF MUTANTS GLY-229; GLU-229 AND LEU-229 IN COMPLEX WITH IRON AND CARBONATE</scope>
    <scope>MUTAGENESIS OF ARG-229</scope>
</reference>
<reference key="72">
    <citation type="submission" date="2004-03" db="PDB data bank">
        <title>Structure of human diferric lactoferrin at 2.5A resolution using crystals grown at pH 6.5.</title>
        <authorList>
            <person name="Vikram P."/>
            <person name="Prem Kumar R."/>
            <person name="Singh N."/>
            <person name="Kumar J."/>
            <person name="Ethayathulla A.S."/>
            <person name="Sharma S."/>
            <person name="Kaur P."/>
            <person name="Singh T.P."/>
        </authorList>
    </citation>
    <scope>X-RAY CRYSTALLOGRAPHY (2.50 ANGSTROMS) OF 20-710 IN COMPLEX WITH IRON AND CARBONATE</scope>
    <scope>GLYCOSYLATION AT ASN-156 AND ASN-497</scope>
</reference>
<reference key="73">
    <citation type="journal article" date="2005" name="J. Biol. Chem.">
        <title>Structural origin of endotoxin neutralization and antimicrobial activity of a lactoferrin-based peptide.</title>
        <authorList>
            <person name="Japelj B."/>
            <person name="Pristovsek P."/>
            <person name="Majerle A."/>
            <person name="Jerala R."/>
        </authorList>
    </citation>
    <scope>STRUCTURE BY NMR OF 39-49 IN COMPLEX WITH LIPOPOLYSACCHARIDE</scope>
    <scope>SYNTHESIS OF 39-49</scope>
</reference>
<reference key="74">
    <citation type="journal article" date="2005" name="Transgenic Res.">
        <title>The protein structure of recombinant human lactoferrin produced in the milk of transgenic cows closely matches the structure of human milk-derived lactoferrin.</title>
        <authorList>
            <person name="Thomassen E.A."/>
            <person name="van Veen H.A."/>
            <person name="van Berkel P.H."/>
            <person name="Nuijens J.H."/>
            <person name="Abrahams J.P."/>
        </authorList>
    </citation>
    <scope>X-RAY CRYSTALLOGRAPHY (2.40 ANGSTROMS) OF 20-710 IN COMPLEX WITH IRON AND CARBONATE</scope>
    <scope>GLYCOSYLATION AT ASN-156 AND ASN-497</scope>
    <scope>VARIANT ASP-579</scope>
</reference>
<reference key="75">
    <citation type="submission" date="2006-05" db="PDB data bank">
        <title>Crystal structure of the complex formed between proteinase K and a human lactoferrin fragment at 2.9 A resolution.</title>
        <authorList>
            <person name="Singh A.K."/>
            <person name="Singh N."/>
            <person name="Sharma S."/>
            <person name="Bhushan A."/>
            <person name="Singh T.P."/>
        </authorList>
    </citation>
    <scope>X-RAY CRYSTALLOGRAPHY (2.90 ANGSTROMS) OF 528-535 IN COMPLEX WITH PROTEINASE K</scope>
</reference>
<reference key="76">
    <citation type="submission" date="2006-06" db="PDB data bank">
        <title>Crystal structure of proteinase K inhibited by a lactoferrin octapeptide Gly-Asp-Glu-Gln-Gly-Glu-Asn-Lys at 2.15 A resolution.</title>
        <authorList>
            <person name="Prem Kumar R."/>
            <person name="Singh A.K."/>
            <person name="Singh N."/>
            <person name="Kaur P."/>
            <person name="Sharma S."/>
            <person name="Singh T.P."/>
        </authorList>
    </citation>
    <scope>X-RAY CRYSTALLOGRAPHY (2.15 ANGSTROMS) OF 528-535 IN COMPLEX WITH PROTEINASE K</scope>
</reference>
<reference key="77">
    <citation type="journal article" date="2007" name="J. Am. Chem. Soc.">
        <title>The acyl group as the central element of the structural organization of antimicrobial lipopeptide.</title>
        <authorList>
            <person name="Japelj B."/>
            <person name="Zorko M."/>
            <person name="Majerle A."/>
            <person name="Pristovsek P."/>
            <person name="Sanchez-Gomez S."/>
            <person name="Martinez de Tejada G."/>
            <person name="Moriyon I."/>
            <person name="Blondelle S.E."/>
            <person name="Brandenburg K."/>
            <person name="Andra J."/>
            <person name="Lohner K."/>
            <person name="Jerala R."/>
        </authorList>
    </citation>
    <scope>STRUCTURE BY NMR OF 39-49</scope>
</reference>
<reference key="78">
    <citation type="journal article" date="2007" name="J. Mol. Biol.">
        <title>Structure of a complex of human lactoferrin N-lobe with pneumococcal surface protein a provides insight into microbial defense mechanism.</title>
        <authorList>
            <person name="Senkovich O."/>
            <person name="Cook W.J."/>
            <person name="Mirza S."/>
            <person name="Hollingshead S.K."/>
            <person name="Protasevich I.I."/>
            <person name="Briles D.E."/>
            <person name="Chattopadhyay D."/>
        </authorList>
    </citation>
    <scope>X-RAY CRYSTALLOGRAPHY (2.91 ANGSTROMS) OF 21-362 IN COMPLEX WITH PNEUMOCOCCAL SURFACE PROTEIN A FRAGMENT; IRON AND CARBONATE</scope>
</reference>
<reference key="79">
    <citation type="journal article" date="1998" name="Mol. Vis.">
        <title>Familial subepithelial corneal amyloidosis (gelatinous drop-like corneal dystrophy): exclusion of linkage to lactoferrin gene.</title>
        <authorList>
            <person name="Klintworth G.K."/>
            <person name="Sommer J.R."/>
            <person name="Obrian G."/>
            <person name="Han L."/>
            <person name="Ahmed M.N."/>
            <person name="Qumsiyeh M.B."/>
            <person name="Lin P.-Y."/>
            <person name="Basti S."/>
            <person name="Reddy M.K."/>
            <person name="Kanai A."/>
            <person name="Hotta Y."/>
            <person name="Sugar J."/>
            <person name="Kumaramanickavel G."/>
            <person name="Munier F."/>
            <person name="Schorderet D.F."/>
            <person name="El Matri L."/>
            <person name="Iwata F."/>
            <person name="Kaiser-Kupfer M."/>
            <person name="Nagata M."/>
            <person name="Nakayasu K."/>
            <person name="Hejtmancik J.F."/>
            <person name="Teng C.T."/>
        </authorList>
    </citation>
    <scope>VARIANTS THR-29 AND ARG-47</scope>
</reference>
<reference key="80">
    <citation type="journal article" date="2012" name="Hum. Immunol.">
        <title>Functional polymorphisms in the LTF gene and risk of coronary artery stenosis.</title>
        <authorList>
            <person name="Videm V."/>
            <person name="Dahl H."/>
            <person name="Walberg L.E."/>
            <person name="Wiseth R."/>
        </authorList>
    </citation>
    <scope>VARIANTS ARG-22 INS AND ARG-47</scope>
</reference>
<protein>
    <recommendedName>
        <fullName>Lactotransferrin</fullName>
        <shortName>Lactoferrin</shortName>
        <ecNumber evidence="12">3.4.21.-</ecNumber>
    </recommendedName>
    <alternativeName>
        <fullName>Growth-inhibiting protein 12</fullName>
    </alternativeName>
    <alternativeName>
        <fullName>Talalactoferrin</fullName>
    </alternativeName>
    <component>
        <recommendedName>
            <fullName>Lactoferricin-H</fullName>
            <shortName>Lfcin-H</shortName>
        </recommendedName>
    </component>
    <component>
        <recommendedName>
            <fullName>Kaliocin-1</fullName>
        </recommendedName>
    </component>
    <component>
        <recommendedName>
            <fullName>Lactoferroxin-A</fullName>
        </recommendedName>
    </component>
    <component>
        <recommendedName>
            <fullName>Lactoferroxin-B</fullName>
        </recommendedName>
    </component>
    <component>
        <recommendedName>
            <fullName>Lactoferroxin-C</fullName>
        </recommendedName>
    </component>
</protein>
<gene>
    <name evidence="70" type="primary">LTF</name>
    <name type="synonym">GIG12</name>
    <name type="synonym">LF</name>
</gene>
<sequence length="710" mass="78182">MKLVFLVLLFLGALGLCLAGRRRSVQWCAVSQPEATKCFQWQRNMRKVRGPPVSCIKRDSPIQCIQAIAENRADAVTLDGGFIYEAGLAPYKLRPVAAEVYGTERQPRTHYYAVAVVKKGGSFQLNELQGLKSCHTGLRRTAGWNVPIGTLRPFLNWTGPPEPIEAAVARFFSASCVPGADKGQFPNLCRLCAGTGENKCAFSSQEPYFSYSGAFKCLRDGAGDVAFIRESTVFEDLSDEAERDEYELLCPDNTRKPVDKFKDCHLARVPSHAVVARSVNGKEDAIWNLLRQAQEKFGKDKSPKFQLFGSPSGQKDLLFKDSAIGFSRVPPRIDSGLYLGSGYFTAIQNLRKSEEEVAARRARVVWCAVGEQELRKCNQWSGLSEGSVTCSSASTTEDCIALVLKGEADAMSLDGGYVYTAGKCGLVPVLAENYKSQQSSDPDPNCVDRPVEGYLAVAVVRRSDTSLTWNSVKGKKSCHTAVDRTAGWNIPMGLLFNQTGSCKFDEYFSQSCAPGSDPRSNLCALCIGDEQGENKCVPNSNERYYGYTGAFRCLAENAGDVAFVKDVTVLQNTDGNNNEAWAKDLKLADFALLCLDGKRKPVTEARSCHLAMAPNHAVVSRMDKVERLKQVLLHQQAKFGRNGSDCPDKFCLFQSETKNLLFNDNTECLARLHGKTTYEKYLGPQYVAGITNLKKCSTSPLLEACEFLRK</sequence>